<proteinExistence type="evidence at protein level"/>
<sequence>MAENSVLTSTTGRTSLADSSIFDSKVTEISKENLLIGSTSYVEEEMPQIETRVILVQEAGKQEELIKALKTIKIMEVPVIKIKESCPGKSDEKLIKSVINMDIKVGFVKMESVEEFEGLDSPEFENVFVVTDFQDSVFNDLYKADCRVIGPPVVLNCSQKGEPLPFSCRPLYCTSMMNLVLCFTGFRKKEELVRLVTLVHHMGGVIRKDFNSKVTHLVANCTQGEKFRVAVSLGTPIMKPEWIYKAWERRNEQDFYAAVDDFRNEFKVPPFQDCILSFLGFSDEEKTNMEEMTEMQGGKYLPLGDERCTHLVVEENIVKDLPFEPSKKLYVVKQEWFWGSIQMDARAGETMYLYEKANTPELKKSVSMLSLNTPNSNRKRRRLKETLAQLSRETDVSPFPPRKRPSAEHSLSIGSLLDISNTPESSINYGDTPKSCTKSSKSSTPVPSKQSARWQVAKELYQTESNYVNILATIIQLFQVPLEEEGQRGGPILAPEEIKTIFGSIPDIFDVHTKIKDDLEDLIVNWDESKSIGDIFLKYSKDLVKTYPPFVNFFEMSKETIIKCEKQKPRFHAFLKINQAKPECGRQSLVELLIRPVQRLPSVALLLNDLKKHTADENPDKSTLEKAIGSLKEVMTHINEDKRKTEAQKQIFDVVYEVDGCPANLLSSHRSLVQRVETISLGEHPCDRGEQVTLFLFNDCLEIARKRHKVIGTFRSPHGQTRPPASLKHIHLMPLSQIKKVLDIRETEDCHNAFALLVRPPTEQANVLLSFQMTSDELPKENWLKMLCRHVANTICKADAENLIYTADPESFEVNTKDMDSTLSRASRAIKKTSKKVTRAFSFSKTPKRALRRALMTSHGSVEGRSPSSNDKHVMSRLSSTSSLAGIPSPSLVSLPSFFERRSHTLSRSTTHLI</sequence>
<keyword id="KW-0002">3D-structure</keyword>
<keyword id="KW-0007">Acetylation</keyword>
<keyword id="KW-0025">Alternative splicing</keyword>
<keyword id="KW-0131">Cell cycle</keyword>
<keyword id="KW-0132">Cell division</keyword>
<keyword id="KW-0965">Cell junction</keyword>
<keyword id="KW-0963">Cytoplasm</keyword>
<keyword id="KW-0206">Cytoskeleton</keyword>
<keyword id="KW-0221">Differentiation</keyword>
<keyword id="KW-0344">Guanine-nucleotide releasing factor</keyword>
<keyword id="KW-1017">Isopeptide bond</keyword>
<keyword id="KW-0524">Neurogenesis</keyword>
<keyword id="KW-0539">Nucleus</keyword>
<keyword id="KW-0553">Oncogene</keyword>
<keyword id="KW-0597">Phosphoprotein</keyword>
<keyword id="KW-0653">Protein transport</keyword>
<keyword id="KW-1267">Proteomics identification</keyword>
<keyword id="KW-1185">Reference proteome</keyword>
<keyword id="KW-0677">Repeat</keyword>
<keyword id="KW-0796">Tight junction</keyword>
<keyword id="KW-0813">Transport</keyword>
<keyword id="KW-0832">Ubl conjugation</keyword>
<reference key="1">
    <citation type="journal article" date="1999" name="J. Cell Biol.">
        <title>Human ECT2 is an exchange factor for Rho GTPases, phosphorylated in G2/M phases, and involved in cytokinesis.</title>
        <authorList>
            <person name="Tatsumoto T."/>
            <person name="Xie X."/>
            <person name="Blumenthal R."/>
            <person name="Okamoto I."/>
            <person name="Miki T."/>
        </authorList>
    </citation>
    <scope>NUCLEOTIDE SEQUENCE [MRNA] (ISOFORM 2)</scope>
    <scope>FUNCTION</scope>
    <scope>PHOSPHORYLATION</scope>
    <scope>SUBCELLULAR LOCATION</scope>
</reference>
<reference key="2">
    <citation type="journal article" date="2003" name="J. Cell. Biochem.">
        <title>Rho exchange factor ECT2 is induced by growth factors and regulates cytokinesis through the N-terminal cell cycle regulator-related domains.</title>
        <authorList>
            <person name="Saito S."/>
            <person name="Tatsumoto T."/>
            <person name="Lorenzi M.V."/>
            <person name="Chedid M."/>
            <person name="Kapoor V."/>
            <person name="Sakata H."/>
            <person name="Rubin J.S."/>
            <person name="Miki T."/>
        </authorList>
    </citation>
    <scope>NUCLEOTIDE SEQUENCE [MRNA] (ISOFORM 2)</scope>
</reference>
<reference key="3">
    <citation type="journal article" date="2006" name="Nat. Cell Biol.">
        <title>The armadillo protein p0071 regulates Rho signalling during cytokinesis.</title>
        <authorList>
            <person name="Wolf A."/>
            <person name="Keil R."/>
            <person name="Gotzl O."/>
            <person name="Mun A."/>
            <person name="Schwarze K."/>
            <person name="Lederer M."/>
            <person name="Huttelmaier S."/>
            <person name="Hatzfeld M."/>
        </authorList>
    </citation>
    <scope>NUCLEOTIDE SEQUENCE [MRNA] (ISOFORM 1)</scope>
    <scope>INTERACTION WITH PKP4</scope>
    <scope>SUBCELLULAR LOCATION</scope>
</reference>
<reference key="4">
    <citation type="journal article" date="2004" name="Nat. Genet.">
        <title>Complete sequencing and characterization of 21,243 full-length human cDNAs.</title>
        <authorList>
            <person name="Ota T."/>
            <person name="Suzuki Y."/>
            <person name="Nishikawa T."/>
            <person name="Otsuki T."/>
            <person name="Sugiyama T."/>
            <person name="Irie R."/>
            <person name="Wakamatsu A."/>
            <person name="Hayashi K."/>
            <person name="Sato H."/>
            <person name="Nagai K."/>
            <person name="Kimura K."/>
            <person name="Makita H."/>
            <person name="Sekine M."/>
            <person name="Obayashi M."/>
            <person name="Nishi T."/>
            <person name="Shibahara T."/>
            <person name="Tanaka T."/>
            <person name="Ishii S."/>
            <person name="Yamamoto J."/>
            <person name="Saito K."/>
            <person name="Kawai Y."/>
            <person name="Isono Y."/>
            <person name="Nakamura Y."/>
            <person name="Nagahari K."/>
            <person name="Murakami K."/>
            <person name="Yasuda T."/>
            <person name="Iwayanagi T."/>
            <person name="Wagatsuma M."/>
            <person name="Shiratori A."/>
            <person name="Sudo H."/>
            <person name="Hosoiri T."/>
            <person name="Kaku Y."/>
            <person name="Kodaira H."/>
            <person name="Kondo H."/>
            <person name="Sugawara M."/>
            <person name="Takahashi M."/>
            <person name="Kanda K."/>
            <person name="Yokoi T."/>
            <person name="Furuya T."/>
            <person name="Kikkawa E."/>
            <person name="Omura Y."/>
            <person name="Abe K."/>
            <person name="Kamihara K."/>
            <person name="Katsuta N."/>
            <person name="Sato K."/>
            <person name="Tanikawa M."/>
            <person name="Yamazaki M."/>
            <person name="Ninomiya K."/>
            <person name="Ishibashi T."/>
            <person name="Yamashita H."/>
            <person name="Murakawa K."/>
            <person name="Fujimori K."/>
            <person name="Tanai H."/>
            <person name="Kimata M."/>
            <person name="Watanabe M."/>
            <person name="Hiraoka S."/>
            <person name="Chiba Y."/>
            <person name="Ishida S."/>
            <person name="Ono Y."/>
            <person name="Takiguchi S."/>
            <person name="Watanabe S."/>
            <person name="Yosida M."/>
            <person name="Hotuta T."/>
            <person name="Kusano J."/>
            <person name="Kanehori K."/>
            <person name="Takahashi-Fujii A."/>
            <person name="Hara H."/>
            <person name="Tanase T.-O."/>
            <person name="Nomura Y."/>
            <person name="Togiya S."/>
            <person name="Komai F."/>
            <person name="Hara R."/>
            <person name="Takeuchi K."/>
            <person name="Arita M."/>
            <person name="Imose N."/>
            <person name="Musashino K."/>
            <person name="Yuuki H."/>
            <person name="Oshima A."/>
            <person name="Sasaki N."/>
            <person name="Aotsuka S."/>
            <person name="Yoshikawa Y."/>
            <person name="Matsunawa H."/>
            <person name="Ichihara T."/>
            <person name="Shiohata N."/>
            <person name="Sano S."/>
            <person name="Moriya S."/>
            <person name="Momiyama H."/>
            <person name="Satoh N."/>
            <person name="Takami S."/>
            <person name="Terashima Y."/>
            <person name="Suzuki O."/>
            <person name="Nakagawa S."/>
            <person name="Senoh A."/>
            <person name="Mizoguchi H."/>
            <person name="Goto Y."/>
            <person name="Shimizu F."/>
            <person name="Wakebe H."/>
            <person name="Hishigaki H."/>
            <person name="Watanabe T."/>
            <person name="Sugiyama A."/>
            <person name="Takemoto M."/>
            <person name="Kawakami B."/>
            <person name="Yamazaki M."/>
            <person name="Watanabe K."/>
            <person name="Kumagai A."/>
            <person name="Itakura S."/>
            <person name="Fukuzumi Y."/>
            <person name="Fujimori Y."/>
            <person name="Komiyama M."/>
            <person name="Tashiro H."/>
            <person name="Tanigami A."/>
            <person name="Fujiwara T."/>
            <person name="Ono T."/>
            <person name="Yamada K."/>
            <person name="Fujii Y."/>
            <person name="Ozaki K."/>
            <person name="Hirao M."/>
            <person name="Ohmori Y."/>
            <person name="Kawabata A."/>
            <person name="Hikiji T."/>
            <person name="Kobatake N."/>
            <person name="Inagaki H."/>
            <person name="Ikema Y."/>
            <person name="Okamoto S."/>
            <person name="Okitani R."/>
            <person name="Kawakami T."/>
            <person name="Noguchi S."/>
            <person name="Itoh T."/>
            <person name="Shigeta K."/>
            <person name="Senba T."/>
            <person name="Matsumura K."/>
            <person name="Nakajima Y."/>
            <person name="Mizuno T."/>
            <person name="Morinaga M."/>
            <person name="Sasaki M."/>
            <person name="Togashi T."/>
            <person name="Oyama M."/>
            <person name="Hata H."/>
            <person name="Watanabe M."/>
            <person name="Komatsu T."/>
            <person name="Mizushima-Sugano J."/>
            <person name="Satoh T."/>
            <person name="Shirai Y."/>
            <person name="Takahashi Y."/>
            <person name="Nakagawa K."/>
            <person name="Okumura K."/>
            <person name="Nagase T."/>
            <person name="Nomura N."/>
            <person name="Kikuchi H."/>
            <person name="Masuho Y."/>
            <person name="Yamashita R."/>
            <person name="Nakai K."/>
            <person name="Yada T."/>
            <person name="Nakamura Y."/>
            <person name="Ohara O."/>
            <person name="Isogai T."/>
            <person name="Sugano S."/>
        </authorList>
    </citation>
    <scope>NUCLEOTIDE SEQUENCE [LARGE SCALE MRNA] (ISOFORM 2)</scope>
    <source>
        <tissue>Teratocarcinoma</tissue>
        <tissue>Testis</tissue>
    </source>
</reference>
<reference key="5">
    <citation type="journal article" date="2006" name="Nature">
        <title>The DNA sequence, annotation and analysis of human chromosome 3.</title>
        <authorList>
            <person name="Muzny D.M."/>
            <person name="Scherer S.E."/>
            <person name="Kaul R."/>
            <person name="Wang J."/>
            <person name="Yu J."/>
            <person name="Sudbrak R."/>
            <person name="Buhay C.J."/>
            <person name="Chen R."/>
            <person name="Cree A."/>
            <person name="Ding Y."/>
            <person name="Dugan-Rocha S."/>
            <person name="Gill R."/>
            <person name="Gunaratne P."/>
            <person name="Harris R.A."/>
            <person name="Hawes A.C."/>
            <person name="Hernandez J."/>
            <person name="Hodgson A.V."/>
            <person name="Hume J."/>
            <person name="Jackson A."/>
            <person name="Khan Z.M."/>
            <person name="Kovar-Smith C."/>
            <person name="Lewis L.R."/>
            <person name="Lozado R.J."/>
            <person name="Metzker M.L."/>
            <person name="Milosavljevic A."/>
            <person name="Miner G.R."/>
            <person name="Morgan M.B."/>
            <person name="Nazareth L.V."/>
            <person name="Scott G."/>
            <person name="Sodergren E."/>
            <person name="Song X.-Z."/>
            <person name="Steffen D."/>
            <person name="Wei S."/>
            <person name="Wheeler D.A."/>
            <person name="Wright M.W."/>
            <person name="Worley K.C."/>
            <person name="Yuan Y."/>
            <person name="Zhang Z."/>
            <person name="Adams C.Q."/>
            <person name="Ansari-Lari M.A."/>
            <person name="Ayele M."/>
            <person name="Brown M.J."/>
            <person name="Chen G."/>
            <person name="Chen Z."/>
            <person name="Clendenning J."/>
            <person name="Clerc-Blankenburg K.P."/>
            <person name="Chen R."/>
            <person name="Chen Z."/>
            <person name="Davis C."/>
            <person name="Delgado O."/>
            <person name="Dinh H.H."/>
            <person name="Dong W."/>
            <person name="Draper H."/>
            <person name="Ernst S."/>
            <person name="Fu G."/>
            <person name="Gonzalez-Garay M.L."/>
            <person name="Garcia D.K."/>
            <person name="Gillett W."/>
            <person name="Gu J."/>
            <person name="Hao B."/>
            <person name="Haugen E."/>
            <person name="Havlak P."/>
            <person name="He X."/>
            <person name="Hennig S."/>
            <person name="Hu S."/>
            <person name="Huang W."/>
            <person name="Jackson L.R."/>
            <person name="Jacob L.S."/>
            <person name="Kelly S.H."/>
            <person name="Kube M."/>
            <person name="Levy R."/>
            <person name="Li Z."/>
            <person name="Liu B."/>
            <person name="Liu J."/>
            <person name="Liu W."/>
            <person name="Lu J."/>
            <person name="Maheshwari M."/>
            <person name="Nguyen B.-V."/>
            <person name="Okwuonu G.O."/>
            <person name="Palmeiri A."/>
            <person name="Pasternak S."/>
            <person name="Perez L.M."/>
            <person name="Phelps K.A."/>
            <person name="Plopper F.J."/>
            <person name="Qiang B."/>
            <person name="Raymond C."/>
            <person name="Rodriguez R."/>
            <person name="Saenphimmachak C."/>
            <person name="Santibanez J."/>
            <person name="Shen H."/>
            <person name="Shen Y."/>
            <person name="Subramanian S."/>
            <person name="Tabor P.E."/>
            <person name="Verduzco D."/>
            <person name="Waldron L."/>
            <person name="Wang J."/>
            <person name="Wang J."/>
            <person name="Wang Q."/>
            <person name="Williams G.A."/>
            <person name="Wong G.K.-S."/>
            <person name="Yao Z."/>
            <person name="Zhang J."/>
            <person name="Zhang X."/>
            <person name="Zhao G."/>
            <person name="Zhou J."/>
            <person name="Zhou Y."/>
            <person name="Nelson D."/>
            <person name="Lehrach H."/>
            <person name="Reinhardt R."/>
            <person name="Naylor S.L."/>
            <person name="Yang H."/>
            <person name="Olson M."/>
            <person name="Weinstock G."/>
            <person name="Gibbs R.A."/>
        </authorList>
    </citation>
    <scope>NUCLEOTIDE SEQUENCE [LARGE SCALE GENOMIC DNA]</scope>
</reference>
<reference key="6">
    <citation type="journal article" date="2004" name="Genome Res.">
        <title>The status, quality, and expansion of the NIH full-length cDNA project: the Mammalian Gene Collection (MGC).</title>
        <authorList>
            <consortium name="The MGC Project Team"/>
        </authorList>
    </citation>
    <scope>NUCLEOTIDE SEQUENCE [LARGE SCALE MRNA] (ISOFORM 2)</scope>
    <source>
        <tissue>Lung</tissue>
    </source>
</reference>
<reference key="7">
    <citation type="journal article" date="2007" name="BMC Genomics">
        <title>The full-ORF clone resource of the German cDNA consortium.</title>
        <authorList>
            <person name="Bechtel S."/>
            <person name="Rosenfelder H."/>
            <person name="Duda A."/>
            <person name="Schmidt C.P."/>
            <person name="Ernst U."/>
            <person name="Wellenreuther R."/>
            <person name="Mehrle A."/>
            <person name="Schuster C."/>
            <person name="Bahr A."/>
            <person name="Bloecker H."/>
            <person name="Heubner D."/>
            <person name="Hoerlein A."/>
            <person name="Michel G."/>
            <person name="Wedler H."/>
            <person name="Koehrer K."/>
            <person name="Ottenwaelder B."/>
            <person name="Poustka A."/>
            <person name="Wiemann S."/>
            <person name="Schupp I."/>
        </authorList>
    </citation>
    <scope>NUCLEOTIDE SEQUENCE [LARGE SCALE MRNA] OF 662-914 (ISOFORM 3)</scope>
    <source>
        <tissue>Testis</tissue>
    </source>
</reference>
<reference key="8">
    <citation type="journal article" date="2004" name="J. Biol. Chem.">
        <title>Deregulation and mislocalization of the cytokinesis regulator ECT2 activate the Rho signaling pathways leading to malignant transformation.</title>
        <authorList>
            <person name="Saito S."/>
            <person name="Liu X.F."/>
            <person name="Kamijo K."/>
            <person name="Raziuddin R."/>
            <person name="Tatsumoto T."/>
            <person name="Okamoto I."/>
            <person name="Chen X."/>
            <person name="Lee C.C."/>
            <person name="Lorenzi M.V."/>
            <person name="Ohara N."/>
            <person name="Miki T."/>
        </authorList>
    </citation>
    <scope>FUNCTION</scope>
    <scope>HOMODIMERIZATION</scope>
    <scope>SUBCELLULAR LOCATION</scope>
    <scope>MUTAGENESIS OF 379-ARG--ARG-381; 402-ARG--ARG-404 AND 596-PRO--ARG-599</scope>
</reference>
<reference key="9">
    <citation type="journal article" date="2004" name="Mol. Cell. Biol.">
        <title>Nucleotide exchange factor ECT2 interacts with the polarity protein complex Par6/Par3/protein kinase Czeta (PKCzeta) and regulates PKCzeta activity.</title>
        <authorList>
            <person name="Liu X.F."/>
            <person name="Ishida H."/>
            <person name="Raziuddin R."/>
            <person name="Miki T."/>
        </authorList>
    </citation>
    <scope>FUNCTION</scope>
    <scope>INTERACTION WITH PARD3; PARD6A; PARD6B AND PRKCQ</scope>
    <scope>INDUCTION</scope>
    <scope>SUBCELLULAR LOCATION</scope>
</reference>
<reference key="10">
    <citation type="journal article" date="2005" name="J. Biol. Chem.">
        <title>The tandem BRCT domains of Ect2 are required for both negative and positive regulation of Ect2 in cytokinesis.</title>
        <authorList>
            <person name="Kim J.E."/>
            <person name="Billadeau D.D."/>
            <person name="Chen J."/>
        </authorList>
    </citation>
    <scope>FUNCTION</scope>
    <scope>HOMODIMERIZATION</scope>
    <scope>HOMOOLIGOMERIZATION</scope>
    <scope>MUTAGENESIS OF TRP-336</scope>
</reference>
<reference key="11">
    <citation type="journal article" date="2005" name="J. Cell Biol.">
        <title>Ect2 and MgcRacGAP regulate the activation and function of Cdc42 in mitosis.</title>
        <authorList>
            <person name="Oceguera-Yanez F."/>
            <person name="Kimura K."/>
            <person name="Yasuda S."/>
            <person name="Higashida C."/>
            <person name="Kitamura T."/>
            <person name="Hiraoka Y."/>
            <person name="Haraguchi T."/>
            <person name="Narumiya S."/>
        </authorList>
    </citation>
    <scope>FUNCTION</scope>
</reference>
<reference key="12">
    <citation type="journal article" date="2005" name="J. Cell Biol.">
        <title>An ECT2-centralspindlin complex regulates the localization and function of RhoA.</title>
        <authorList>
            <person name="Yuce O."/>
            <person name="Piekny A."/>
            <person name="Glotzer M."/>
        </authorList>
    </citation>
    <scope>FUNCTION</scope>
    <scope>INTERACTION WITH RACGAP1</scope>
    <scope>MUTAGENESIS OF THR-373</scope>
    <scope>SUBCELLULAR LOCATION</scope>
</reference>
<reference key="13">
    <citation type="journal article" date="2005" name="Proc. Natl. Acad. Sci. U.S.A.">
        <title>MgcRacGAP controls the assembly of the contractile ring and the initiation of cytokinesis.</title>
        <authorList>
            <person name="Zhao W.-M."/>
            <person name="Fang G."/>
        </authorList>
    </citation>
    <scope>INTERACTION WITH RACGAP1</scope>
</reference>
<reference key="14">
    <citation type="journal article" date="2006" name="Cell. Signal.">
        <title>Nucleotide exchange factor ECT2 regulates epithelial cell polarity.</title>
        <authorList>
            <person name="Liu X.F."/>
            <person name="Ohno S."/>
            <person name="Miki T."/>
        </authorList>
    </citation>
    <scope>FUNCTION</scope>
    <scope>SUBCELLULAR LOCATION</scope>
</reference>
<reference key="15">
    <citation type="journal article" date="2006" name="Mol. Biol. Cell">
        <title>Deregulation of HEF1 impairs M-phase progression by disrupting the RhoA activation cycle.</title>
        <authorList>
            <person name="Dadke D."/>
            <person name="Jarnik M."/>
            <person name="Pugacheva E.N."/>
            <person name="Singh M.K."/>
            <person name="Golemis E.A."/>
        </authorList>
    </citation>
    <scope>INTERACTION WITH NEDD9</scope>
    <scope>SUBCELLULAR LOCATION</scope>
</reference>
<reference key="16">
    <citation type="journal article" date="2006" name="Mol. Biol. Cell">
        <title>Dissecting the role of Rho-mediated signaling in contractile ring formation.</title>
        <authorList>
            <person name="Kamijo K."/>
            <person name="Ohara N."/>
            <person name="Abe M."/>
            <person name="Uchimura T."/>
            <person name="Hosoya H."/>
            <person name="Lee J.S."/>
            <person name="Miki T."/>
        </authorList>
    </citation>
    <scope>FUNCTION</scope>
    <scope>IDENTIFICATION IN THE CENTRALSPINDLIN COMPLEX</scope>
    <scope>INTERACTION WITH KIF23 AND RACGAP1</scope>
    <scope>SUBCELLULAR LOCATION</scope>
</reference>
<reference key="17">
    <citation type="journal article" date="2006" name="Oncogene">
        <title>Cytokinesis regulator ECT2 changes its conformation through phosphorylation at Thr-341 in G2/M phase.</title>
        <authorList>
            <person name="Hara T."/>
            <person name="Abe M."/>
            <person name="Inoue H."/>
            <person name="Yu L.R."/>
            <person name="Veenstra T.D."/>
            <person name="Kang Y.H."/>
            <person name="Lee K.S."/>
            <person name="Miki T."/>
        </authorList>
    </citation>
    <scope>FUNCTION</scope>
    <scope>HOMODIMERIZATION</scope>
    <scope>PHOSPHORYLATION AT THR-373</scope>
    <scope>MUTAGENESIS OF THR-373</scope>
</reference>
<reference key="18">
    <citation type="journal article" date="2006" name="Oncogene">
        <title>Phosphorylation of the cytokinesis regulator ECT2 at G2/M phase stimulates association of the mitotic kinase Plk1 and accumulation of GTP-bound RhoA.</title>
        <authorList>
            <person name="Niiya F."/>
            <person name="Tatsumoto T."/>
            <person name="Lee K.S."/>
            <person name="Miki T."/>
        </authorList>
    </citation>
    <scope>PHOSPHORYLATION AT THR-444</scope>
    <scope>INTERACTION WITH PLK1</scope>
    <scope>MUTAGENESIS OF THR-444 AND THR-846</scope>
</reference>
<reference key="19">
    <citation type="journal article" date="2008" name="EMBO J.">
        <title>Sequential Cyk-4 binding to ECT2 and FIP3 regulates cleavage furrow ingression and abscission during cytokinesis.</title>
        <authorList>
            <person name="Simon G.C."/>
            <person name="Schonteich E."/>
            <person name="Wu C.C."/>
            <person name="Piekny A."/>
            <person name="Ekiert D."/>
            <person name="Yu X."/>
            <person name="Gould G.W."/>
            <person name="Glotzer M."/>
            <person name="Prekeris R."/>
        </authorList>
    </citation>
    <scope>INTERACTION WITH RAB11FIP3</scope>
</reference>
<reference key="20">
    <citation type="journal article" date="2008" name="J. Proteome Res.">
        <title>Combining protein-based IMAC, peptide-based IMAC, and MudPIT for efficient phosphoproteomic analysis.</title>
        <authorList>
            <person name="Cantin G.T."/>
            <person name="Yi W."/>
            <person name="Lu B."/>
            <person name="Park S.K."/>
            <person name="Xu T."/>
            <person name="Lee J.-D."/>
            <person name="Yates J.R. III"/>
        </authorList>
    </citation>
    <scope>IDENTIFICATION BY MASS SPECTROMETRY [LARGE SCALE ANALYSIS]</scope>
    <source>
        <tissue>Cervix carcinoma</tissue>
    </source>
</reference>
<reference key="21">
    <citation type="journal article" date="2008" name="Proc. Natl. Acad. Sci. U.S.A.">
        <title>A quantitative atlas of mitotic phosphorylation.</title>
        <authorList>
            <person name="Dephoure N."/>
            <person name="Zhou C."/>
            <person name="Villen J."/>
            <person name="Beausoleil S.A."/>
            <person name="Bakalarski C.E."/>
            <person name="Elledge S.J."/>
            <person name="Gygi S.P."/>
        </authorList>
    </citation>
    <scope>PHOSPHORYLATION [LARGE SCALE ANALYSIS] AT SER-367; SER-370; THR-373; SER-376; SER-842 AND THR-846</scope>
    <scope>IDENTIFICATION BY MASS SPECTROMETRY [LARGE SCALE ANALYSIS]</scope>
    <source>
        <tissue>Cervix carcinoma</tissue>
    </source>
</reference>
<reference key="22">
    <citation type="journal article" date="2009" name="Mol. Biol. Cell">
        <title>Centrosome/spindle pole-associated protein regulates cytokinesis via promoting the recruitment of MyoGEF to the central spindle.</title>
        <authorList>
            <person name="Asiedu M."/>
            <person name="Wu D."/>
            <person name="Matsumura F."/>
            <person name="Wei Q."/>
        </authorList>
    </citation>
    <scope>FUNCTION</scope>
</reference>
<reference key="23">
    <citation type="journal article" date="2009" name="Oncogene">
        <title>Ect2 links the PKCiota-Par6alpha complex to Rac1 activation and cellular transformation.</title>
        <authorList>
            <person name="Justilien V."/>
            <person name="Fields A.P."/>
        </authorList>
    </citation>
    <scope>FUNCTION</scope>
    <scope>INTERACTION WITH PARD6A AND PRKCI</scope>
    <scope>SUBCELLULAR LOCATION</scope>
    <scope>TISSUE SPECIFICITY</scope>
</reference>
<reference key="24">
    <citation type="journal article" date="2009" name="PLoS Biol.">
        <title>Polo-like kinase 1 directs assembly of the HsCyk-4 RhoGAP/Ect2 RhoGEF complex to initiate cleavage furrow formation.</title>
        <authorList>
            <person name="Wolfe B.A."/>
            <person name="Takaki T."/>
            <person name="Petronczki M."/>
            <person name="Glotzer M."/>
        </authorList>
    </citation>
    <scope>FUNCTION</scope>
    <scope>INTERACTION WITH KIF23 AND RACGAP1</scope>
    <scope>SUBCELLULAR LOCATION</scope>
    <scope>MUTAGENESIS OF THR-184 AND LYS-226</scope>
</reference>
<reference key="25">
    <citation type="journal article" date="2009" name="PLoS Biol.">
        <title>Plk1 self-organization and priming phosphorylation of HsCYK-4 at the spindle midzone regulate the onset of division in human cells.</title>
        <authorList>
            <person name="Burkard M.E."/>
            <person name="Maciejowski J."/>
            <person name="Rodriguez-Bravo V."/>
            <person name="Repka M."/>
            <person name="Lowery D.M."/>
            <person name="Clauser K.R."/>
            <person name="Zhang C."/>
            <person name="Shokat K.M."/>
            <person name="Carr S.A."/>
            <person name="Yaffe M.B."/>
            <person name="Jallepalli P.V."/>
        </authorList>
    </citation>
    <scope>INTERACTION WITH RACGAP1</scope>
</reference>
<reference key="26">
    <citation type="journal article" date="2009" name="Sci. Signal.">
        <title>Quantitative phosphoproteomic analysis of T cell receptor signaling reveals system-wide modulation of protein-protein interactions.</title>
        <authorList>
            <person name="Mayya V."/>
            <person name="Lundgren D.H."/>
            <person name="Hwang S.-I."/>
            <person name="Rezaul K."/>
            <person name="Wu L."/>
            <person name="Eng J.K."/>
            <person name="Rodionov V."/>
            <person name="Han D.K."/>
        </authorList>
    </citation>
    <scope>IDENTIFICATION BY MASS SPECTROMETRY [LARGE SCALE ANALYSIS]</scope>
    <source>
        <tissue>Leukemic T-cell</tissue>
    </source>
</reference>
<reference key="27">
    <citation type="journal article" date="2010" name="Sci. Signal.">
        <title>Quantitative phosphoproteomics reveals widespread full phosphorylation site occupancy during mitosis.</title>
        <authorList>
            <person name="Olsen J.V."/>
            <person name="Vermeulen M."/>
            <person name="Santamaria A."/>
            <person name="Kumar C."/>
            <person name="Miller M.L."/>
            <person name="Jensen L.J."/>
            <person name="Gnad F."/>
            <person name="Cox J."/>
            <person name="Jensen T.S."/>
            <person name="Nigg E.A."/>
            <person name="Brunak S."/>
            <person name="Mann M."/>
        </authorList>
    </citation>
    <scope>PHOSPHORYLATION [LARGE SCALE ANALYSIS] AT THR-359</scope>
    <scope>IDENTIFICATION BY MASS SPECTROMETRY [LARGE SCALE ANALYSIS]</scope>
    <source>
        <tissue>Cervix carcinoma</tissue>
    </source>
</reference>
<reference key="28">
    <citation type="journal article" date="2011" name="J. Biol. Chem.">
        <title>Oncogenic activity of Ect2 is regulated through protein kinase C iota-mediated phosphorylation.</title>
        <authorList>
            <person name="Justilien V."/>
            <person name="Jameison L."/>
            <person name="Der C.J."/>
            <person name="Rossman K.L."/>
            <person name="Fields A.P."/>
        </authorList>
    </citation>
    <scope>FUNCTION</scope>
    <scope>PHOSPHORYLATION AT THR-359</scope>
    <scope>MUTAGENESIS OF THR-359</scope>
    <scope>IDENTIFICATION BY MASS SPECTROMETRY</scope>
</reference>
<reference key="29">
    <citation type="journal article" date="2011" name="PLoS ONE">
        <title>The nuclear guanine nucleotide exchange factors Ect2 and Net1 regulate RhoB-mediated cell death after DNA damage.</title>
        <authorList>
            <person name="Srougi M.C."/>
            <person name="Burridge K."/>
        </authorList>
    </citation>
    <scope>FUNCTION</scope>
    <scope>INDUCTION</scope>
</reference>
<reference key="30">
    <citation type="journal article" date="2011" name="Sci. Signal.">
        <title>System-wide temporal characterization of the proteome and phosphoproteome of human embryonic stem cell differentiation.</title>
        <authorList>
            <person name="Rigbolt K.T."/>
            <person name="Prokhorova T.A."/>
            <person name="Akimov V."/>
            <person name="Henningsen J."/>
            <person name="Johansen P.T."/>
            <person name="Kratchmarova I."/>
            <person name="Kassem M."/>
            <person name="Mann M."/>
            <person name="Olsen J.V."/>
            <person name="Blagoev B."/>
        </authorList>
    </citation>
    <scope>PHOSPHORYLATION [LARGE SCALE ANALYSIS] AT THR-359</scope>
    <scope>IDENTIFICATION BY MASS SPECTROMETRY [LARGE SCALE ANALYSIS]</scope>
</reference>
<reference key="31">
    <citation type="journal article" date="2012" name="Proc. Natl. Acad. Sci. U.S.A.">
        <title>N-terminal acetylome analyses and functional insights of the N-terminal acetyltransferase NatB.</title>
        <authorList>
            <person name="Van Damme P."/>
            <person name="Lasa M."/>
            <person name="Polevoda B."/>
            <person name="Gazquez C."/>
            <person name="Elosegui-Artola A."/>
            <person name="Kim D.S."/>
            <person name="De Juan-Pardo E."/>
            <person name="Demeyer K."/>
            <person name="Hole K."/>
            <person name="Larrea E."/>
            <person name="Timmerman E."/>
            <person name="Prieto J."/>
            <person name="Arnesen T."/>
            <person name="Sherman F."/>
            <person name="Gevaert K."/>
            <person name="Aldabe R."/>
        </authorList>
    </citation>
    <scope>ACETYLATION [LARGE SCALE ANALYSIS] AT ALA-2</scope>
    <scope>CLEAVAGE OF INITIATOR METHIONINE [LARGE SCALE ANALYSIS]</scope>
    <scope>IDENTIFICATION BY MASS SPECTROMETRY [LARGE SCALE ANALYSIS]</scope>
</reference>
<reference key="32">
    <citation type="journal article" date="2013" name="J. Proteome Res.">
        <title>Toward a comprehensive characterization of a human cancer cell phosphoproteome.</title>
        <authorList>
            <person name="Zhou H."/>
            <person name="Di Palma S."/>
            <person name="Preisinger C."/>
            <person name="Peng M."/>
            <person name="Polat A.N."/>
            <person name="Heck A.J."/>
            <person name="Mohammed S."/>
        </authorList>
    </citation>
    <scope>PHOSPHORYLATION [LARGE SCALE ANALYSIS] AT THR-359; SER-367; SER-716; SER-861 AND SER-866</scope>
    <scope>IDENTIFICATION BY MASS SPECTROMETRY [LARGE SCALE ANALYSIS]</scope>
    <source>
        <tissue>Cervix carcinoma</tissue>
        <tissue>Erythroleukemia</tissue>
    </source>
</reference>
<reference key="33">
    <citation type="journal article" date="2017" name="Nat. Struct. Mol. Biol.">
        <title>Site-specific mapping of the human SUMO proteome reveals co-modification with phosphorylation.</title>
        <authorList>
            <person name="Hendriks I.A."/>
            <person name="Lyon D."/>
            <person name="Young C."/>
            <person name="Jensen L.J."/>
            <person name="Vertegaal A.C."/>
            <person name="Nielsen M.L."/>
        </authorList>
    </citation>
    <scope>SUMOYLATION [LARGE SCALE ANALYSIS] AT LYS-611</scope>
    <scope>IDENTIFICATION BY MASS SPECTROMETRY [LARGE SCALE ANALYSIS]</scope>
</reference>
<reference key="34">
    <citation type="submission" date="2010-01" db="PDB data bank">
        <title>Crystal structure of the second BRCT domain of epithelial cell transforming 2 (ECT2).</title>
        <authorList>
            <consortium name="Structural genomics consortium (SGC)"/>
        </authorList>
    </citation>
    <scope>X-RAY CRYSTALLOGRAPHY (1.48 ANGSTROMS) OF 268-361</scope>
</reference>
<reference evidence="35" key="35">
    <citation type="journal article" date="2014" name="FEBS Lett.">
        <title>Crystal structure of triple-BRCT-domain of ECT2 and insights into the binding characteristics to CYK-4.</title>
        <authorList>
            <person name="Zou Y."/>
            <person name="Shao Z."/>
            <person name="Peng J."/>
            <person name="Li F."/>
            <person name="Gong D."/>
            <person name="Wang C."/>
            <person name="Zuo X."/>
            <person name="Zhang Z."/>
            <person name="Wu J."/>
            <person name="Shi Y."/>
            <person name="Gong Q."/>
        </authorList>
    </citation>
    <scope>X-RAY CRYSTALLOGRAPHY (3.11 ANGSTROMS) OF 45-356</scope>
    <scope>FUNCTION</scope>
    <scope>ACTIVITY REGULATION</scope>
    <scope>INTERACTION WITH RACGAP1</scope>
    <scope>MUTAGENESIS OF THR-184 AND LYS-226</scope>
</reference>
<reference evidence="36" key="36">
    <citation type="journal article" date="2020" name="Proc. Natl. Acad. Sci. U.S.A.">
        <title>Structure and regulation of human epithelial cell transforming 2 protein.</title>
        <authorList>
            <person name="Chen M."/>
            <person name="Pan H."/>
            <person name="Sun L."/>
            <person name="Shi P."/>
            <person name="Zhang Y."/>
            <person name="Li L."/>
            <person name="Huang Y."/>
            <person name="Chen J."/>
            <person name="Jiang P."/>
            <person name="Fang X."/>
            <person name="Wu C."/>
            <person name="Chen Z."/>
        </authorList>
    </citation>
    <scope>X-RAY CRYSTALLOGRAPHY (2.80 ANGSTROMS) OF 173-865</scope>
    <scope>FUNCTION</scope>
    <scope>ACTIVITY REGULATION</scope>
    <scope>INTERACTION WITH RHOA</scope>
    <scope>DOMAIN</scope>
    <scope>IDENTIFICATION BY MASS SPECTROMETRY</scope>
    <scope>MUTAGENESIS OF TRP-338; ARG-488; ARG-570; ALA-573; ARG-586; PRO-601; PHE-652; TYR-656; ARG-670; PRO-734 AND CYS-796</scope>
</reference>
<reference key="37">
    <citation type="journal article" date="2006" name="Science">
        <title>The consensus coding sequences of human breast and colorectal cancers.</title>
        <authorList>
            <person name="Sjoeblom T."/>
            <person name="Jones S."/>
            <person name="Wood L.D."/>
            <person name="Parsons D.W."/>
            <person name="Lin J."/>
            <person name="Barber T.D."/>
            <person name="Mandelker D."/>
            <person name="Leary R.J."/>
            <person name="Ptak J."/>
            <person name="Silliman N."/>
            <person name="Szabo S."/>
            <person name="Buckhaults P."/>
            <person name="Farrell C."/>
            <person name="Meeh P."/>
            <person name="Markowitz S.D."/>
            <person name="Willis J."/>
            <person name="Dawson D."/>
            <person name="Willson J.K.V."/>
            <person name="Gazdar A.F."/>
            <person name="Hartigan J."/>
            <person name="Wu L."/>
            <person name="Liu C."/>
            <person name="Parmigiani G."/>
            <person name="Park B.H."/>
            <person name="Bachman K.E."/>
            <person name="Papadopoulos N."/>
            <person name="Vogelstein B."/>
            <person name="Kinzler K.W."/>
            <person name="Velculescu V.E."/>
        </authorList>
    </citation>
    <scope>VARIANT [LARGE SCALE ANALYSIS] PRO-833</scope>
</reference>
<evidence type="ECO:0000250" key="1">
    <source>
        <dbReference type="UniProtKB" id="Q07139"/>
    </source>
</evidence>
<evidence type="ECO:0000255" key="2">
    <source>
        <dbReference type="PROSITE-ProRule" id="PRU00033"/>
    </source>
</evidence>
<evidence type="ECO:0000255" key="3">
    <source>
        <dbReference type="PROSITE-ProRule" id="PRU00062"/>
    </source>
</evidence>
<evidence type="ECO:0000256" key="4">
    <source>
        <dbReference type="SAM" id="MobiDB-lite"/>
    </source>
</evidence>
<evidence type="ECO:0000269" key="5">
    <source>
    </source>
</evidence>
<evidence type="ECO:0000269" key="6">
    <source>
    </source>
</evidence>
<evidence type="ECO:0000269" key="7">
    <source>
    </source>
</evidence>
<evidence type="ECO:0000269" key="8">
    <source>
    </source>
</evidence>
<evidence type="ECO:0000269" key="9">
    <source>
    </source>
</evidence>
<evidence type="ECO:0000269" key="10">
    <source>
    </source>
</evidence>
<evidence type="ECO:0000269" key="11">
    <source>
    </source>
</evidence>
<evidence type="ECO:0000269" key="12">
    <source>
    </source>
</evidence>
<evidence type="ECO:0000269" key="13">
    <source>
    </source>
</evidence>
<evidence type="ECO:0000269" key="14">
    <source>
    </source>
</evidence>
<evidence type="ECO:0000269" key="15">
    <source>
    </source>
</evidence>
<evidence type="ECO:0000269" key="16">
    <source>
    </source>
</evidence>
<evidence type="ECO:0000269" key="17">
    <source>
    </source>
</evidence>
<evidence type="ECO:0000269" key="18">
    <source>
    </source>
</evidence>
<evidence type="ECO:0000269" key="19">
    <source>
    </source>
</evidence>
<evidence type="ECO:0000269" key="20">
    <source>
    </source>
</evidence>
<evidence type="ECO:0000269" key="21">
    <source>
    </source>
</evidence>
<evidence type="ECO:0000269" key="22">
    <source>
    </source>
</evidence>
<evidence type="ECO:0000269" key="23">
    <source>
    </source>
</evidence>
<evidence type="ECO:0000269" key="24">
    <source>
    </source>
</evidence>
<evidence type="ECO:0000269" key="25">
    <source>
    </source>
</evidence>
<evidence type="ECO:0000269" key="26">
    <source>
    </source>
</evidence>
<evidence type="ECO:0000269" key="27">
    <source>
    </source>
</evidence>
<evidence type="ECO:0000303" key="28">
    <source>
    </source>
</evidence>
<evidence type="ECO:0000303" key="29">
    <source>
    </source>
</evidence>
<evidence type="ECO:0000303" key="30">
    <source>
    </source>
</evidence>
<evidence type="ECO:0000303" key="31">
    <source>
    </source>
</evidence>
<evidence type="ECO:0000303" key="32">
    <source>
    </source>
</evidence>
<evidence type="ECO:0000305" key="33"/>
<evidence type="ECO:0000312" key="34">
    <source>
        <dbReference type="HGNC" id="HGNC:3155"/>
    </source>
</evidence>
<evidence type="ECO:0007744" key="35">
    <source>
        <dbReference type="PDB" id="4N40"/>
    </source>
</evidence>
<evidence type="ECO:0007744" key="36">
    <source>
        <dbReference type="PDB" id="6L30"/>
    </source>
</evidence>
<evidence type="ECO:0007744" key="37">
    <source>
    </source>
</evidence>
<evidence type="ECO:0007744" key="38">
    <source>
    </source>
</evidence>
<evidence type="ECO:0007744" key="39">
    <source>
    </source>
</evidence>
<evidence type="ECO:0007744" key="40">
    <source>
    </source>
</evidence>
<evidence type="ECO:0007744" key="41">
    <source>
    </source>
</evidence>
<evidence type="ECO:0007744" key="42">
    <source>
    </source>
</evidence>
<evidence type="ECO:0007829" key="43">
    <source>
        <dbReference type="PDB" id="3L46"/>
    </source>
</evidence>
<evidence type="ECO:0007829" key="44">
    <source>
        <dbReference type="PDB" id="4N40"/>
    </source>
</evidence>
<evidence type="ECO:0007829" key="45">
    <source>
        <dbReference type="PDB" id="6L30"/>
    </source>
</evidence>
<name>ECT2_HUMAN</name>
<feature type="initiator methionine" description="Removed" evidence="40">
    <location>
        <position position="1"/>
    </location>
</feature>
<feature type="chain" id="PRO_0000080938" description="Protein ECT2">
    <location>
        <begin position="2"/>
        <end position="914"/>
    </location>
</feature>
<feature type="domain" description="BRCT 1" evidence="2">
    <location>
        <begin position="171"/>
        <end position="260"/>
    </location>
</feature>
<feature type="domain" description="BRCT 2" evidence="2">
    <location>
        <begin position="266"/>
        <end position="354"/>
    </location>
</feature>
<feature type="domain" description="DH" evidence="3">
    <location>
        <begin position="452"/>
        <end position="641"/>
    </location>
</feature>
<feature type="domain" description="PH">
    <location>
        <begin position="675"/>
        <end position="794"/>
    </location>
</feature>
<feature type="region of interest" description="Disordered" evidence="4">
    <location>
        <begin position="388"/>
        <end position="449"/>
    </location>
</feature>
<feature type="region of interest" description="Disordered" evidence="4">
    <location>
        <begin position="857"/>
        <end position="884"/>
    </location>
</feature>
<feature type="short sequence motif" description="Nuclear localization signal">
    <location>
        <begin position="378"/>
        <end position="382"/>
    </location>
</feature>
<feature type="short sequence motif" description="Nuclear localization signal">
    <location>
        <begin position="401"/>
        <end position="405"/>
    </location>
</feature>
<feature type="compositionally biased region" description="Polar residues" evidence="4">
    <location>
        <begin position="418"/>
        <end position="429"/>
    </location>
</feature>
<feature type="compositionally biased region" description="Low complexity" evidence="4">
    <location>
        <begin position="432"/>
        <end position="449"/>
    </location>
</feature>
<feature type="modified residue" description="N-acetylalanine" evidence="40">
    <location>
        <position position="2"/>
    </location>
</feature>
<feature type="modified residue" description="Phosphothreonine; by PKC/PRKCI" evidence="23 38 39 41">
    <location>
        <position position="359"/>
    </location>
</feature>
<feature type="modified residue" description="Phosphoserine" evidence="37 41">
    <location>
        <position position="367"/>
    </location>
</feature>
<feature type="modified residue" description="Phosphoserine" evidence="37">
    <location>
        <position position="370"/>
    </location>
</feature>
<feature type="modified residue" description="Phosphothreonine; by CDK1" evidence="12 37">
    <location>
        <position position="373"/>
    </location>
</feature>
<feature type="modified residue" description="Phosphoserine" evidence="37">
    <location>
        <position position="376"/>
    </location>
</feature>
<feature type="modified residue" description="Phosphothreonine; by CDK1" evidence="14">
    <location>
        <position position="444"/>
    </location>
</feature>
<feature type="modified residue" description="Phosphoserine" evidence="41">
    <location>
        <position position="716"/>
    </location>
</feature>
<feature type="modified residue" description="Phosphoserine" evidence="37">
    <location>
        <position position="842"/>
    </location>
</feature>
<feature type="modified residue" description="Phosphothreonine; by CDK1" evidence="37">
    <location>
        <position position="846"/>
    </location>
</feature>
<feature type="modified residue" description="Phosphoserine" evidence="41">
    <location>
        <position position="861"/>
    </location>
</feature>
<feature type="modified residue" description="Phosphoserine" evidence="41">
    <location>
        <position position="866"/>
    </location>
</feature>
<feature type="cross-link" description="Glycyl lysine isopeptide (Lys-Gly) (interchain with G-Cter in SUMO2)" evidence="42">
    <location>
        <position position="611"/>
    </location>
</feature>
<feature type="splice variant" id="VSP_041976" description="In isoform 2." evidence="28 29 30 31">
    <location>
        <position position="44"/>
    </location>
</feature>
<feature type="splice variant" id="VSP_041977" description="In isoform 2 and isoform 4." evidence="28 29 30 31">
    <location>
        <begin position="71"/>
        <end position="101"/>
    </location>
</feature>
<feature type="splice variant" id="VSP_041978" description="In isoform 3." evidence="32">
    <original>GIPSPSLVSLPSFFERRSHTLSRSTTHLI</original>
    <variation>ITHSVSTSNVIGFTKHVYVQRLNSTGGRSQYSWFQSVRHSAFRASFSEILEGNTDFSNFKKVLSKSSLTFVKN</variation>
    <location>
        <begin position="886"/>
        <end position="914"/>
    </location>
</feature>
<feature type="sequence variant" id="VAR_047064" description="In dbSNP:rs34703432.">
    <original>S</original>
    <variation>T</variation>
    <location>
        <position position="15"/>
    </location>
</feature>
<feature type="sequence variant" id="VAR_035975" description="In a breast cancer sample; somatic mutation." evidence="17">
    <original>T</original>
    <variation>P</variation>
    <location>
        <position position="833"/>
    </location>
</feature>
<feature type="mutagenesis site" description="Inhibits interaction with RACGAP1. Abolishes targeting to the central spindle." evidence="20 26">
    <original>T</original>
    <variation>A</variation>
    <location>
        <position position="184"/>
    </location>
</feature>
<feature type="mutagenesis site" description="Inhibits interaction with RACGAP1. Abolishes targeting to the central spindle." evidence="20 26">
    <original>K</original>
    <variation>A</variation>
    <location>
        <position position="226"/>
    </location>
</feature>
<feature type="mutagenesis site" description="Inhibits homodimerization. Increases binding with RhoA and GEF activity." evidence="8">
    <original>W</original>
    <variation>R</variation>
    <location>
        <position position="336"/>
    </location>
</feature>
<feature type="mutagenesis site" description="2-fold increase in GEF activity." evidence="27">
    <original>W</original>
    <variation>A</variation>
    <location>
        <position position="338"/>
    </location>
</feature>
<feature type="mutagenesis site" description="Inhibits its phosphorylation and anchorage-independent growth and invasion in cancer cells. Does not inhibit its GEF activity." evidence="23">
    <original>T</original>
    <variation>A</variation>
    <location>
        <position position="359"/>
    </location>
</feature>
<feature type="mutagenesis site" description="Does not inhibit its Rho exchange activity. Increases interaction with RACGAP1. Does not inhibit anchorage-independent growth and invasion in cancer cells." evidence="10 12">
    <original>T</original>
    <variation>A</variation>
    <location>
        <position position="373"/>
    </location>
</feature>
<feature type="mutagenesis site" description="Does not inhibit subcellular localization or homodimerization. Enhances its Rho exchange activity." evidence="10 12">
    <original>T</original>
    <variation>D</variation>
    <location>
        <position position="373"/>
    </location>
</feature>
<feature type="mutagenesis site" description="Shows both nuclear and cytoplasmic localization and activates its transforming activity." evidence="6">
    <original>KRR</original>
    <variation>AAA</variation>
    <location>
        <begin position="379"/>
        <end position="381"/>
    </location>
</feature>
<feature type="mutagenesis site" description="Shows both nuclear and cytoplasmic localization and activates its transforming activity." evidence="6">
    <original>RKR</original>
    <variation>AKA</variation>
    <location>
        <begin position="402"/>
        <end position="404"/>
    </location>
</feature>
<feature type="mutagenesis site" description="Diminishes its phosphorylation status. Reduces its interaction with PLK1 and Rho exchange activity. Does not change its subcellular localization. Does not inhibit anchorage-independent growth and invasion in cancer cells." evidence="14">
    <original>T</original>
    <variation>A</variation>
    <location>
        <position position="444"/>
    </location>
</feature>
<feature type="mutagenesis site" description="Does not reduce its interaction with PLK1, change its subcellular localization and Rho exchange activity." evidence="14">
    <original>T</original>
    <variation>D</variation>
    <location>
        <position position="444"/>
    </location>
</feature>
<feature type="mutagenesis site" description="Partially releases inhibition." evidence="27">
    <original>R</original>
    <variation>C</variation>
    <location>
        <position position="488"/>
    </location>
</feature>
<feature type="mutagenesis site" description="2-fold increase in GEF activity." evidence="27">
    <original>R</original>
    <variation>D</variation>
    <location>
        <position position="570"/>
    </location>
</feature>
<feature type="mutagenesis site" description="2-fold increase in GEF activity." evidence="27">
    <original>A</original>
    <variation>D</variation>
    <location>
        <position position="573"/>
    </location>
</feature>
<feature type="mutagenesis site" description="Complete loss of GEF activity and failure to support cytokinesis." evidence="27">
    <original>R</original>
    <variation>Q</variation>
    <location>
        <position position="586"/>
    </location>
</feature>
<feature type="mutagenesis site" description="Inhibits activation of the transforming activity." evidence="6">
    <original>PVQR</original>
    <variation>AAAA</variation>
    <location>
        <begin position="596"/>
        <end position="599"/>
    </location>
</feature>
<feature type="mutagenesis site" description="Complete loss of GEF activity and failure to support cytokinesis." evidence="27">
    <original>P</original>
    <variation>S</variation>
    <location>
        <position position="601"/>
    </location>
</feature>
<feature type="mutagenesis site" description="No effect on GEF activity but severely decreases ECT2 activation by RHOA. Localizes correctly but fails to rescue the cytokinesis defect caused by knockdown of endogenous ECT2 in contrast to the wild-type protein which rescues this defect." evidence="27">
    <original>F</original>
    <variation>A</variation>
    <location>
        <position position="652"/>
    </location>
</feature>
<feature type="mutagenesis site" description="No effect on GEF activity but severely decreases ECT2 activation by RHOA. Fails to rescue the cytokinesis defect caused by knockdown of endogenous ECT2 in contrast to the wild-type protein which rescues this defect." evidence="27">
    <original>Y</original>
    <variation>A</variation>
    <location>
        <position position="656"/>
    </location>
</feature>
<feature type="mutagenesis site" description="Marked increase in GEF activity and rescues the cytokinesis defect caused by depletion of endogenous ECT2. When expressed in a cancer cell line, causes faster cell proliferation than the wild-type protein." evidence="27">
    <original>R</original>
    <variation>Q</variation>
    <location>
        <position position="670"/>
    </location>
</feature>
<feature type="mutagenesis site" description="More than 10-fold increase in GEF activity. Overexpression causes noticeable changes in interphase cell morphology such as cell rounding and formation of stress fibers, suggesting ectopic RhoA activation." evidence="27">
    <original>P</original>
    <variation>D</variation>
    <location>
        <position position="734"/>
    </location>
</feature>
<feature type="mutagenesis site" description="More than 10-fold increase in GEF activity. Overexpression causes noticeable changes in interphase cell morphology such as cell rounding and formation of stress fibers, suggesting ectopic RHOA activation." evidence="27">
    <original>C</original>
    <variation>K</variation>
    <location>
        <position position="796"/>
    </location>
</feature>
<feature type="mutagenesis site" description="Diminishes its phosphorylation status." evidence="14">
    <original>T</original>
    <variation>A</variation>
    <location>
        <position position="846"/>
    </location>
</feature>
<feature type="sequence conflict" description="In Ref. 5; BAB14498." evidence="33" ref="5">
    <original>I</original>
    <variation>T</variation>
    <location>
        <position position="66"/>
    </location>
</feature>
<feature type="sequence conflict" description="In Ref. 5; BAB14498." evidence="33" ref="5">
    <original>L</original>
    <variation>F</variation>
    <location>
        <position position="276"/>
    </location>
</feature>
<feature type="sequence conflict" description="In Ref. 5; BAB14498." evidence="33" ref="5">
    <original>E</original>
    <variation>D</variation>
    <location>
        <position position="393"/>
    </location>
</feature>
<feature type="strand" evidence="44">
    <location>
        <begin position="51"/>
        <end position="56"/>
    </location>
</feature>
<feature type="helix" evidence="44">
    <location>
        <begin position="57"/>
        <end position="59"/>
    </location>
</feature>
<feature type="helix" evidence="44">
    <location>
        <begin position="63"/>
        <end position="70"/>
    </location>
</feature>
<feature type="strand" evidence="44">
    <location>
        <begin position="107"/>
        <end position="112"/>
    </location>
</feature>
<feature type="helix" evidence="44">
    <location>
        <begin position="115"/>
        <end position="119"/>
    </location>
</feature>
<feature type="strand" evidence="44">
    <location>
        <begin position="124"/>
        <end position="129"/>
    </location>
</feature>
<feature type="helix" evidence="44">
    <location>
        <begin position="136"/>
        <end position="143"/>
    </location>
</feature>
<feature type="strand" evidence="44">
    <location>
        <begin position="147"/>
        <end position="149"/>
    </location>
</feature>
<feature type="helix" evidence="44">
    <location>
        <begin position="151"/>
        <end position="159"/>
    </location>
</feature>
<feature type="turn" evidence="45">
    <location>
        <begin position="173"/>
        <end position="178"/>
    </location>
</feature>
<feature type="strand" evidence="45">
    <location>
        <begin position="180"/>
        <end position="184"/>
    </location>
</feature>
<feature type="helix" evidence="45">
    <location>
        <begin position="189"/>
        <end position="201"/>
    </location>
</feature>
<feature type="strand" evidence="45">
    <location>
        <begin position="215"/>
        <end position="224"/>
    </location>
</feature>
<feature type="helix" evidence="45">
    <location>
        <begin position="225"/>
        <end position="233"/>
    </location>
</feature>
<feature type="helix" evidence="45">
    <location>
        <begin position="241"/>
        <end position="249"/>
    </location>
</feature>
<feature type="helix" evidence="45">
    <location>
        <begin position="260"/>
        <end position="263"/>
    </location>
</feature>
<feature type="helix" evidence="45">
    <location>
        <begin position="264"/>
        <end position="266"/>
    </location>
</feature>
<feature type="turn" evidence="43">
    <location>
        <begin position="270"/>
        <end position="273"/>
    </location>
</feature>
<feature type="strand" evidence="43">
    <location>
        <begin position="278"/>
        <end position="280"/>
    </location>
</feature>
<feature type="helix" evidence="43">
    <location>
        <begin position="283"/>
        <end position="295"/>
    </location>
</feature>
<feature type="strand" evidence="43">
    <location>
        <begin position="309"/>
        <end position="313"/>
    </location>
</feature>
<feature type="turn" evidence="43">
    <location>
        <begin position="315"/>
        <end position="317"/>
    </location>
</feature>
<feature type="strand" evidence="43">
    <location>
        <begin position="318"/>
        <end position="320"/>
    </location>
</feature>
<feature type="strand" evidence="43">
    <location>
        <begin position="330"/>
        <end position="333"/>
    </location>
</feature>
<feature type="helix" evidence="43">
    <location>
        <begin position="334"/>
        <end position="343"/>
    </location>
</feature>
<feature type="helix" evidence="43">
    <location>
        <begin position="349"/>
        <end position="351"/>
    </location>
</feature>
<feature type="helix" evidence="45">
    <location>
        <begin position="453"/>
        <end position="477"/>
    </location>
</feature>
<feature type="helix" evidence="45">
    <location>
        <begin position="479"/>
        <end position="483"/>
    </location>
</feature>
<feature type="helix" evidence="45">
    <location>
        <begin position="495"/>
        <end position="502"/>
    </location>
</feature>
<feature type="helix" evidence="45">
    <location>
        <begin position="505"/>
        <end position="522"/>
    </location>
</feature>
<feature type="helix" evidence="45">
    <location>
        <begin position="532"/>
        <end position="552"/>
    </location>
</feature>
<feature type="helix" evidence="45">
    <location>
        <begin position="554"/>
        <end position="567"/>
    </location>
</feature>
<feature type="helix" evidence="45">
    <location>
        <begin position="569"/>
        <end position="579"/>
    </location>
</feature>
<feature type="helix" evidence="45">
    <location>
        <begin position="582"/>
        <end position="584"/>
    </location>
</feature>
<feature type="helix" evidence="45">
    <location>
        <begin position="589"/>
        <end position="611"/>
    </location>
</feature>
<feature type="helix" evidence="45">
    <location>
        <begin position="622"/>
        <end position="634"/>
    </location>
</feature>
<feature type="helix" evidence="45">
    <location>
        <begin position="635"/>
        <end position="637"/>
    </location>
</feature>
<feature type="helix" evidence="45">
    <location>
        <begin position="642"/>
        <end position="657"/>
    </location>
</feature>
<feature type="helix" evidence="45">
    <location>
        <begin position="664"/>
        <end position="667"/>
    </location>
</feature>
<feature type="strand" evidence="45">
    <location>
        <begin position="672"/>
        <end position="687"/>
    </location>
</feature>
<feature type="strand" evidence="45">
    <location>
        <begin position="691"/>
        <end position="697"/>
    </location>
</feature>
<feature type="strand" evidence="45">
    <location>
        <begin position="700"/>
        <end position="706"/>
    </location>
</feature>
<feature type="strand" evidence="45">
    <location>
        <begin position="726"/>
        <end position="734"/>
    </location>
</feature>
<feature type="helix" evidence="45">
    <location>
        <begin position="735"/>
        <end position="737"/>
    </location>
</feature>
<feature type="strand" evidence="45">
    <location>
        <begin position="738"/>
        <end position="744"/>
    </location>
</feature>
<feature type="strand" evidence="45">
    <location>
        <begin position="748"/>
        <end position="758"/>
    </location>
</feature>
<feature type="turn" evidence="45">
    <location>
        <begin position="761"/>
        <end position="763"/>
    </location>
</feature>
<feature type="strand" evidence="45">
    <location>
        <begin position="767"/>
        <end position="773"/>
    </location>
</feature>
<feature type="helix" evidence="45">
    <location>
        <begin position="780"/>
        <end position="795"/>
    </location>
</feature>
<feature type="strand" evidence="45">
    <location>
        <begin position="803"/>
        <end position="807"/>
    </location>
</feature>
<accession>Q9H8V3</accession>
<accession>Q0MT80</accession>
<accession>Q2M269</accession>
<accession>Q6U836</accession>
<accession>Q9NSV8</accession>
<accession>Q9NVW9</accession>
<comment type="function">
    <text evidence="5 6 7 8 9 10 12 13 16 19 20 22 23 24 26 27">Guanine nucleotide exchange factor (GEF) that catalyzes the exchange of GDP for GTP. Promotes guanine nucleotide exchange on the Rho family members of small GTPases, like RHOA, RHOC, RAC1 and CDC42. Required for signal transduction pathways involved in the regulation of cytokinesis. Component of the centralspindlin complex that serves as a microtubule-dependent and Rho-mediated signaling required for the myosin contractile ring formation during the cell cycle cytokinesis. Regulates the translocation of RHOA from the central spindle to the equatorial region. Plays a role in the control of mitotic spindle assembly; regulates the activation of CDC42 in metaphase for the process of spindle fibers attachment to kinetochores before chromosome congression. Involved in the regulation of epithelial cell polarity; participates in the formation of epithelial tight junctions in a polarity complex PARD3-PARD6-protein kinase PRKCQ-dependent manner. Plays a role in the regulation of neurite outgrowth. Inhibits phenobarbital (PB)-induced NR1I3 nuclear translocation. Stimulates the activity of RAC1 through its association with the oncogenic PARD6A-PRKCI complex in cancer cells, thereby acting to coordinately drive tumor cell proliferation and invasion. Also stimulates genotoxic stress-induced RHOB activity in breast cancer cells leading to their cell death.</text>
</comment>
<comment type="activity regulation">
    <text evidence="26 27">Autoinhibited by the C-terminal PH domain which folds back and binds to the surface of the DH domain, blocking binding of RHOA to the catalytic center of the DH domain (PubMed:31888991). The 2nd BRCT domain is also involved in inhibition, probably by helping to impede RHOA binding (PubMed:31888991). Allosterically activated by binding of activated GTP-bound RHOA to the PH domain which stimulates the release of PH inhibition and promotes the binding of substrate RHOA to the catalytic center (PubMed:31888991). Binding of phosphorylated RACGAP1 to the N-terminal BRCT domain-containing region also releases autoinhibition (PubMed:25068414).</text>
</comment>
<comment type="subunit">
    <text evidence="1 6 7 8 10 11 12 13 14 15 20 21 22 25 26 27">Homodimer (PubMed:14645260, PubMed:15545273, PubMed:16170345). Homooligomer (PubMed:15545273). Found in the centralspindlin complex (PubMed:16236794). Interacts with NR1I3 (By similarity). Interacts (Thr-359 phosphorylated form) with PARD6A; the interaction is observed in cancer cells (PubMed:15254234, PubMed:19617897). Interacts (Thr-359 phosphorylated form) with PRKCI; the interaction is observed in cancer cells (PubMed:19617897). Interacts with PKP4; the interaction is observed at the midbody (PubMed:22814378). Interacts with RACGAP1/CYK4; the interaction is direct, occurs in a microtubule-dependent manner, occurs at anaphase and during cytokinesis, is inhibited in metaphase by phosphorylation of ECT2 on Thr-373 and is stimulated in early anaphase by dephosphorylation of ECT2 probably on Thr-373 through CDK1 activity (PubMed:16103226, PubMed:16129829, PubMed:16236794, PubMed:19468300, PubMed:19468302, PubMed:25068414). Interacts with PLK1; the interaction is stimulated upon its phosphorylation on Thr-444 (PubMed:16247472). Interacts with RHOA; the interaction results in allosteric activation of ECT2 (PubMed:31888991). Interacts with KIF23, PARD3, PARD6B and PRKCQ (PubMed:15254234, PubMed:16236794). Interacts with NEDD9/HEF1 (PubMed:16394104).</text>
</comment>
<comment type="interaction">
    <interactant intactId="EBI-1054039">
        <id>Q9H8V3</id>
    </interactant>
    <interactant intactId="EBI-727477">
        <id>P12830</id>
        <label>CDH1</label>
    </interactant>
    <organismsDiffer>false</organismsDiffer>
    <experiments>3</experiments>
</comment>
<comment type="interaction">
    <interactant intactId="EBI-1054039">
        <id>Q9H8V3</id>
    </interactant>
    <interactant intactId="EBI-701918">
        <id>P35221</id>
        <label>CTNNA1</label>
    </interactant>
    <organismsDiffer>false</organismsDiffer>
    <experiments>3</experiments>
</comment>
<comment type="interaction">
    <interactant intactId="EBI-1054039">
        <id>Q9H8V3</id>
    </interactant>
    <interactant intactId="EBI-306852">
        <id>Q02241</id>
        <label>KIF23</label>
    </interactant>
    <organismsDiffer>false</organismsDiffer>
    <experiments>2</experiments>
</comment>
<comment type="interaction">
    <interactant intactId="EBI-1054039">
        <id>Q9H8V3</id>
    </interactant>
    <interactant intactId="EBI-389883">
        <id>P16333</id>
        <label>NCK1</label>
    </interactant>
    <organismsDiffer>false</organismsDiffer>
    <experiments>3</experiments>
</comment>
<comment type="interaction">
    <interactant intactId="EBI-1054039">
        <id>Q9H8V3</id>
    </interactant>
    <interactant intactId="EBI-746202">
        <id>O00444</id>
        <label>PLK4</label>
    </interactant>
    <organismsDiffer>false</organismsDiffer>
    <experiments>3</experiments>
</comment>
<comment type="interaction">
    <interactant intactId="EBI-1054039">
        <id>Q9H8V3</id>
    </interactant>
    <interactant intactId="EBI-717233">
        <id>Q9H0H5</id>
        <label>RACGAP1</label>
    </interactant>
    <organismsDiffer>false</organismsDiffer>
    <experiments>15</experiments>
</comment>
<comment type="subcellular location">
    <subcellularLocation>
        <location evidence="5 6 7 10 16 22">Nucleus</location>
    </subcellularLocation>
    <subcellularLocation>
        <location evidence="5 13 15">Cytoplasm</location>
    </subcellularLocation>
    <subcellularLocation>
        <location evidence="5 10 13 18 20">Cytoplasm</location>
        <location evidence="5 10 13 18 20">Cytoskeleton</location>
        <location evidence="5 10 13 18 20">Spindle</location>
    </subcellularLocation>
    <subcellularLocation>
        <location evidence="5">Cleavage furrow</location>
    </subcellularLocation>
    <subcellularLocation>
        <location evidence="7 15 18">Midbody</location>
    </subcellularLocation>
    <subcellularLocation>
        <location evidence="7 16">Cell junction</location>
    </subcellularLocation>
    <subcellularLocation>
        <location evidence="7">Cell junction</location>
        <location evidence="7">Tight junction</location>
    </subcellularLocation>
    <subcellularLocation>
        <location evidence="18">Cytoplasm</location>
        <location evidence="18">Cytoskeleton</location>
        <location evidence="18">Microtubule organizing center</location>
        <location evidence="18">Centrosome</location>
    </subcellularLocation>
    <text evidence="5 7">Sequestered within the nucleus during interphase (PubMed:10579713). Dispersed throughout the cytoplasm upon breakdown of the nuclear envelope during mitosis (PubMed:10579713). Colocalizes with the centralspindlin complex to the mitotic spindles during anaphase/metaphase, the cleavage furrow during telophase and at the midbody at the end of cytokinesis (PubMed:10579713). Colocalized with RhoA at the midbody (PubMed:10579713). Its subcellular localization to tight junction is increased by calcium (PubMed:15254234).</text>
</comment>
<comment type="alternative products">
    <event type="alternative splicing"/>
    <isoform>
        <id>Q9H8V3-1</id>
        <name>1</name>
        <sequence type="displayed"/>
    </isoform>
    <isoform>
        <id>Q9H8V3-2</id>
        <name>2</name>
        <sequence type="described" ref="VSP_041976 VSP_041977"/>
    </isoform>
    <isoform>
        <id>Q9H8V3-3</id>
        <name>3</name>
        <sequence type="described" ref="VSP_041978"/>
    </isoform>
    <isoform>
        <id>Q9H8V3-4</id>
        <name>4</name>
        <sequence type="described" ref="VSP_041977"/>
    </isoform>
</comment>
<comment type="tissue specificity">
    <text evidence="22">Expressed in lung epithelial cells (at protein level). Expressed in squamous cell carcinoma, primary non-small cell lung cancer tumors and lung adenocarcinoma.</text>
</comment>
<comment type="induction">
    <text evidence="7 24">Up-regulated by calcium in cells forming cell-cell contact sites. Up-regulated by DNA damaging agents like H(2)O(2) or ionizing radiation (IR).</text>
</comment>
<comment type="domain">
    <text evidence="8 27">The BRCT domains 1 and 2 are required for intramolecular interaction, but not for intermolecular oligomerization (PubMed:15545273). The BRCT domains negatively inhibit its GEF activity in interphase cells (PubMed:15545273, PubMed:31888991). The same BRCT domains may act as a positive regulatory motif for the completion of cytokinesis after the breakdown of nuclear membrane during mitosis (PubMed:15545273).</text>
</comment>
<comment type="PTM">
    <text evidence="5 12 14 23">Phosphorylated by PLK1 in vitro. Hyperphosphorylated during the G2 phase of the cell cycle. Phosphorylation at Thr-373 occurs during the G2/M phase, relieves its auto-inhibition status and stimulates its GEF activity. Phosphorylation at Thr-444 in G2/M phase is required for subsequent binding with PLK1 and Rho exchange activation. Dephosphorylated at the time of cytokinesis. Phosphorylation at Thr-359 is required for its transformation activity in cancer cells.</text>
</comment>
<comment type="miscellaneous">
    <molecule>Isoform 3</molecule>
    <text evidence="33">May be produced at very low levels due to a premature stop codon in the mRNA, leading to nonsense-mediated mRNA decay.</text>
</comment>
<comment type="sequence caution" evidence="33">
    <conflict type="erroneous initiation">
        <sequence resource="EMBL-CDS" id="BAA91624"/>
    </conflict>
    <text>Truncated N-terminus.</text>
</comment>
<comment type="online information" name="Atlas of Genetics and Cytogenetics in Oncology and Haematology">
    <link uri="https://atlasgeneticsoncology.org/gene/40400/ECT2"/>
</comment>
<dbReference type="EMBL" id="AY376439">
    <property type="protein sequence ID" value="AAQ83675.1"/>
    <property type="molecule type" value="mRNA"/>
</dbReference>
<dbReference type="EMBL" id="DQ847274">
    <property type="protein sequence ID" value="ABH10140.1"/>
    <property type="molecule type" value="mRNA"/>
</dbReference>
<dbReference type="EMBL" id="AK001323">
    <property type="protein sequence ID" value="BAA91624.1"/>
    <property type="status" value="ALT_INIT"/>
    <property type="molecule type" value="mRNA"/>
</dbReference>
<dbReference type="EMBL" id="AK023267">
    <property type="protein sequence ID" value="BAB14498.1"/>
    <property type="molecule type" value="mRNA"/>
</dbReference>
<dbReference type="EMBL" id="AK314581">
    <property type="protein sequence ID" value="BAG37157.1"/>
    <property type="molecule type" value="mRNA"/>
</dbReference>
<dbReference type="EMBL" id="AC108667">
    <property type="status" value="NOT_ANNOTATED_CDS"/>
    <property type="molecule type" value="Genomic_DNA"/>
</dbReference>
<dbReference type="EMBL" id="BC112086">
    <property type="protein sequence ID" value="AAI12087.1"/>
    <property type="molecule type" value="mRNA"/>
</dbReference>
<dbReference type="EMBL" id="AL137710">
    <property type="protein sequence ID" value="CAB70886.1"/>
    <property type="molecule type" value="mRNA"/>
</dbReference>
<dbReference type="CCDS" id="CCDS3220.1">
    <molecule id="Q9H8V3-4"/>
</dbReference>
<dbReference type="CCDS" id="CCDS58860.1">
    <molecule id="Q9H8V3-1"/>
</dbReference>
<dbReference type="CCDS" id="CCDS87168.1">
    <molecule id="Q9H8V3-2"/>
</dbReference>
<dbReference type="RefSeq" id="NP_001245244.1">
    <molecule id="Q9H8V3-1"/>
    <property type="nucleotide sequence ID" value="NM_001258315.2"/>
</dbReference>
<dbReference type="RefSeq" id="NP_001245245.1">
    <molecule id="Q9H8V3-4"/>
    <property type="nucleotide sequence ID" value="NM_001258316.2"/>
</dbReference>
<dbReference type="RefSeq" id="NP_001336023.1">
    <molecule id="Q9H8V3-3"/>
    <property type="nucleotide sequence ID" value="NM_001349094.2"/>
</dbReference>
<dbReference type="RefSeq" id="NP_001336024.1">
    <molecule id="Q9H8V3-3"/>
    <property type="nucleotide sequence ID" value="NM_001349095.2"/>
</dbReference>
<dbReference type="RefSeq" id="NP_001336025.1">
    <molecule id="Q9H8V3-3"/>
    <property type="nucleotide sequence ID" value="NM_001349096.2"/>
</dbReference>
<dbReference type="RefSeq" id="NP_001336027.1">
    <molecule id="Q9H8V3-1"/>
    <property type="nucleotide sequence ID" value="NM_001349098.2"/>
</dbReference>
<dbReference type="RefSeq" id="NP_001336028.1">
    <molecule id="Q9H8V3-1"/>
    <property type="nucleotide sequence ID" value="NM_001349099.2"/>
</dbReference>
<dbReference type="RefSeq" id="NP_001336029.1">
    <molecule id="Q9H8V3-1"/>
    <property type="nucleotide sequence ID" value="NM_001349100.2"/>
</dbReference>
<dbReference type="RefSeq" id="NP_001336031.1">
    <molecule id="Q9H8V3-2"/>
    <property type="nucleotide sequence ID" value="NM_001349102.2"/>
</dbReference>
<dbReference type="RefSeq" id="NP_060568.3">
    <molecule id="Q9H8V3-4"/>
    <property type="nucleotide sequence ID" value="NM_018098.5"/>
</dbReference>
<dbReference type="RefSeq" id="XP_011510816.1">
    <property type="nucleotide sequence ID" value="XM_011512514.2"/>
</dbReference>
<dbReference type="RefSeq" id="XP_047303563.1">
    <molecule id="Q9H8V3-3"/>
    <property type="nucleotide sequence ID" value="XM_047447607.1"/>
</dbReference>
<dbReference type="RefSeq" id="XP_047303564.1">
    <molecule id="Q9H8V3-3"/>
    <property type="nucleotide sequence ID" value="XM_047447608.1"/>
</dbReference>
<dbReference type="RefSeq" id="XP_047303565.1">
    <molecule id="Q9H8V3-3"/>
    <property type="nucleotide sequence ID" value="XM_047447609.1"/>
</dbReference>
<dbReference type="RefSeq" id="XP_047303573.1">
    <molecule id="Q9H8V3-1"/>
    <property type="nucleotide sequence ID" value="XM_047447617.1"/>
</dbReference>
<dbReference type="RefSeq" id="XP_047303574.1">
    <molecule id="Q9H8V3-1"/>
    <property type="nucleotide sequence ID" value="XM_047447618.1"/>
</dbReference>
<dbReference type="RefSeq" id="XP_047303583.1">
    <molecule id="Q9H8V3-4"/>
    <property type="nucleotide sequence ID" value="XM_047447627.1"/>
</dbReference>
<dbReference type="RefSeq" id="XP_047303584.1">
    <molecule id="Q9H8V3-4"/>
    <property type="nucleotide sequence ID" value="XM_047447628.1"/>
</dbReference>
<dbReference type="RefSeq" id="XP_047303585.1">
    <molecule id="Q9H8V3-4"/>
    <property type="nucleotide sequence ID" value="XM_047447629.1"/>
</dbReference>
<dbReference type="RefSeq" id="XP_047303586.1">
    <molecule id="Q9H8V3-4"/>
    <property type="nucleotide sequence ID" value="XM_047447630.1"/>
</dbReference>
<dbReference type="RefSeq" id="XP_054201507.1">
    <molecule id="Q9H8V3-3"/>
    <property type="nucleotide sequence ID" value="XM_054345532.1"/>
</dbReference>
<dbReference type="RefSeq" id="XP_054201508.1">
    <molecule id="Q9H8V3-3"/>
    <property type="nucleotide sequence ID" value="XM_054345533.1"/>
</dbReference>
<dbReference type="RefSeq" id="XP_054201509.1">
    <molecule id="Q9H8V3-3"/>
    <property type="nucleotide sequence ID" value="XM_054345534.1"/>
</dbReference>
<dbReference type="RefSeq" id="XP_054201517.1">
    <molecule id="Q9H8V3-1"/>
    <property type="nucleotide sequence ID" value="XM_054345542.1"/>
</dbReference>
<dbReference type="RefSeq" id="XP_054201518.1">
    <molecule id="Q9H8V3-1"/>
    <property type="nucleotide sequence ID" value="XM_054345543.1"/>
</dbReference>
<dbReference type="RefSeq" id="XP_054201528.1">
    <molecule id="Q9H8V3-4"/>
    <property type="nucleotide sequence ID" value="XM_054345553.1"/>
</dbReference>
<dbReference type="RefSeq" id="XP_054201529.1">
    <molecule id="Q9H8V3-4"/>
    <property type="nucleotide sequence ID" value="XM_054345554.1"/>
</dbReference>
<dbReference type="RefSeq" id="XP_054201530.1">
    <molecule id="Q9H8V3-4"/>
    <property type="nucleotide sequence ID" value="XM_054345555.1"/>
</dbReference>
<dbReference type="RefSeq" id="XP_054201531.1">
    <molecule id="Q9H8V3-4"/>
    <property type="nucleotide sequence ID" value="XM_054345556.1"/>
</dbReference>
<dbReference type="PDB" id="3L46">
    <property type="method" value="X-ray"/>
    <property type="resolution" value="1.48 A"/>
    <property type="chains" value="A/B=268-361"/>
</dbReference>
<dbReference type="PDB" id="4N40">
    <property type="method" value="X-ray"/>
    <property type="resolution" value="3.11 A"/>
    <property type="chains" value="A=45-356"/>
</dbReference>
<dbReference type="PDB" id="6L30">
    <property type="method" value="X-ray"/>
    <property type="resolution" value="2.80 A"/>
    <property type="chains" value="A=173-865"/>
</dbReference>
<dbReference type="PDBsum" id="3L46"/>
<dbReference type="PDBsum" id="4N40"/>
<dbReference type="PDBsum" id="6L30"/>
<dbReference type="SMR" id="Q9H8V3"/>
<dbReference type="BioGRID" id="108223">
    <property type="interactions" value="891"/>
</dbReference>
<dbReference type="CORUM" id="Q9H8V3"/>
<dbReference type="DIP" id="DIP-47496N"/>
<dbReference type="FunCoup" id="Q9H8V3">
    <property type="interactions" value="1534"/>
</dbReference>
<dbReference type="IntAct" id="Q9H8V3">
    <property type="interactions" value="42"/>
</dbReference>
<dbReference type="MINT" id="Q9H8V3"/>
<dbReference type="STRING" id="9606.ENSP00000376457"/>
<dbReference type="GlyGen" id="Q9H8V3">
    <property type="glycosylation" value="3 sites, 1 N-linked glycan (1 site), 1 O-linked glycan (2 sites)"/>
</dbReference>
<dbReference type="iPTMnet" id="Q9H8V3"/>
<dbReference type="MetOSite" id="Q9H8V3"/>
<dbReference type="PhosphoSitePlus" id="Q9H8V3"/>
<dbReference type="SwissPalm" id="Q9H8V3"/>
<dbReference type="BioMuta" id="ECT2"/>
<dbReference type="DMDM" id="357529579"/>
<dbReference type="jPOST" id="Q9H8V3"/>
<dbReference type="MassIVE" id="Q9H8V3"/>
<dbReference type="PaxDb" id="9606-ENSP00000376457"/>
<dbReference type="PeptideAtlas" id="Q9H8V3"/>
<dbReference type="ProteomicsDB" id="81243">
    <molecule id="Q9H8V3-1"/>
</dbReference>
<dbReference type="ProteomicsDB" id="81244">
    <molecule id="Q9H8V3-2"/>
</dbReference>
<dbReference type="ProteomicsDB" id="81245">
    <molecule id="Q9H8V3-3"/>
</dbReference>
<dbReference type="Pumba" id="Q9H8V3"/>
<dbReference type="Antibodypedia" id="33733">
    <property type="antibodies" value="365 antibodies from 31 providers"/>
</dbReference>
<dbReference type="DNASU" id="1894"/>
<dbReference type="Ensembl" id="ENST00000232458.9">
    <molecule id="Q9H8V3-4"/>
    <property type="protein sequence ID" value="ENSP00000232458.5"/>
    <property type="gene ID" value="ENSG00000114346.14"/>
</dbReference>
<dbReference type="Ensembl" id="ENST00000392692.8">
    <molecule id="Q9H8V3-1"/>
    <property type="protein sequence ID" value="ENSP00000376457.3"/>
    <property type="gene ID" value="ENSG00000114346.14"/>
</dbReference>
<dbReference type="Ensembl" id="ENST00000417960.5">
    <molecule id="Q9H8V3-2"/>
    <property type="protein sequence ID" value="ENSP00000415876.1"/>
    <property type="gene ID" value="ENSG00000114346.14"/>
</dbReference>
<dbReference type="Ensembl" id="ENST00000441497.6">
    <molecule id="Q9H8V3-4"/>
    <property type="protein sequence ID" value="ENSP00000412259.2"/>
    <property type="gene ID" value="ENSG00000114346.14"/>
</dbReference>
<dbReference type="Ensembl" id="ENST00000540509.5">
    <molecule id="Q9H8V3-4"/>
    <property type="protein sequence ID" value="ENSP00000443160.2"/>
    <property type="gene ID" value="ENSG00000114346.14"/>
</dbReference>
<dbReference type="GeneID" id="1894"/>
<dbReference type="KEGG" id="hsa:1894"/>
<dbReference type="MANE-Select" id="ENST00000392692.8">
    <property type="protein sequence ID" value="ENSP00000376457.3"/>
    <property type="RefSeq nucleotide sequence ID" value="NM_001258315.2"/>
    <property type="RefSeq protein sequence ID" value="NP_001245244.1"/>
</dbReference>
<dbReference type="UCSC" id="uc003fih.4">
    <molecule id="Q9H8V3-1"/>
    <property type="organism name" value="human"/>
</dbReference>
<dbReference type="AGR" id="HGNC:3155"/>
<dbReference type="CTD" id="1894"/>
<dbReference type="DisGeNET" id="1894"/>
<dbReference type="GeneCards" id="ECT2"/>
<dbReference type="HGNC" id="HGNC:3155">
    <property type="gene designation" value="ECT2"/>
</dbReference>
<dbReference type="HPA" id="ENSG00000114346">
    <property type="expression patterns" value="Low tissue specificity"/>
</dbReference>
<dbReference type="MIM" id="600586">
    <property type="type" value="gene"/>
</dbReference>
<dbReference type="neXtProt" id="NX_Q9H8V3"/>
<dbReference type="OpenTargets" id="ENSG00000114346"/>
<dbReference type="PharmGKB" id="PA27600"/>
<dbReference type="VEuPathDB" id="HostDB:ENSG00000114346"/>
<dbReference type="eggNOG" id="KOG3524">
    <property type="taxonomic scope" value="Eukaryota"/>
</dbReference>
<dbReference type="GeneTree" id="ENSGT00940000156299"/>
<dbReference type="HOGENOM" id="CLU_008187_0_0_1"/>
<dbReference type="InParanoid" id="Q9H8V3"/>
<dbReference type="OMA" id="PIYDVHK"/>
<dbReference type="OrthoDB" id="9997817at2759"/>
<dbReference type="PAN-GO" id="Q9H8V3">
    <property type="GO annotations" value="5 GO annotations based on evolutionary models"/>
</dbReference>
<dbReference type="TreeFam" id="TF101161"/>
<dbReference type="PathwayCommons" id="Q9H8V3"/>
<dbReference type="Reactome" id="R-HSA-193648">
    <property type="pathway name" value="NRAGE signals death through JNK"/>
</dbReference>
<dbReference type="Reactome" id="R-HSA-416482">
    <property type="pathway name" value="G alpha (12/13) signalling events"/>
</dbReference>
<dbReference type="Reactome" id="R-HSA-8980692">
    <property type="pathway name" value="RHOA GTPase cycle"/>
</dbReference>
<dbReference type="Reactome" id="R-HSA-9013026">
    <property type="pathway name" value="RHOB GTPase cycle"/>
</dbReference>
<dbReference type="Reactome" id="R-HSA-9013148">
    <property type="pathway name" value="CDC42 GTPase cycle"/>
</dbReference>
<dbReference type="Reactome" id="R-HSA-9013149">
    <property type="pathway name" value="RAC1 GTPase cycle"/>
</dbReference>
<dbReference type="SignaLink" id="Q9H8V3"/>
<dbReference type="SIGNOR" id="Q9H8V3"/>
<dbReference type="BioGRID-ORCS" id="1894">
    <property type="hits" value="654 hits in 1167 CRISPR screens"/>
</dbReference>
<dbReference type="ChiTaRS" id="ECT2">
    <property type="organism name" value="human"/>
</dbReference>
<dbReference type="EvolutionaryTrace" id="Q9H8V3"/>
<dbReference type="GeneWiki" id="ECT2"/>
<dbReference type="GenomeRNAi" id="1894"/>
<dbReference type="Pharos" id="Q9H8V3">
    <property type="development level" value="Tbio"/>
</dbReference>
<dbReference type="PRO" id="PR:Q9H8V3"/>
<dbReference type="Proteomes" id="UP000005640">
    <property type="component" value="Chromosome 3"/>
</dbReference>
<dbReference type="RNAct" id="Q9H8V3">
    <property type="molecule type" value="protein"/>
</dbReference>
<dbReference type="Bgee" id="ENSG00000114346">
    <property type="expression patterns" value="Expressed in secondary oocyte and 166 other cell types or tissues"/>
</dbReference>
<dbReference type="ExpressionAtlas" id="Q9H8V3">
    <property type="expression patterns" value="baseline and differential"/>
</dbReference>
<dbReference type="GO" id="GO:0005923">
    <property type="term" value="C:bicellular tight junction"/>
    <property type="evidence" value="ECO:0000314"/>
    <property type="project" value="UniProtKB"/>
</dbReference>
<dbReference type="GO" id="GO:0005938">
    <property type="term" value="C:cell cortex"/>
    <property type="evidence" value="ECO:0000318"/>
    <property type="project" value="GO_Central"/>
</dbReference>
<dbReference type="GO" id="GO:0005911">
    <property type="term" value="C:cell-cell junction"/>
    <property type="evidence" value="ECO:0000314"/>
    <property type="project" value="UniProtKB"/>
</dbReference>
<dbReference type="GO" id="GO:0097149">
    <property type="term" value="C:centralspindlin complex"/>
    <property type="evidence" value="ECO:0000314"/>
    <property type="project" value="UniProtKB"/>
</dbReference>
<dbReference type="GO" id="GO:0005813">
    <property type="term" value="C:centrosome"/>
    <property type="evidence" value="ECO:0007669"/>
    <property type="project" value="UniProtKB-SubCell"/>
</dbReference>
<dbReference type="GO" id="GO:0032154">
    <property type="term" value="C:cleavage furrow"/>
    <property type="evidence" value="ECO:0000314"/>
    <property type="project" value="UniProtKB"/>
</dbReference>
<dbReference type="GO" id="GO:0005737">
    <property type="term" value="C:cytoplasm"/>
    <property type="evidence" value="ECO:0000314"/>
    <property type="project" value="UniProtKB"/>
</dbReference>
<dbReference type="GO" id="GO:0005829">
    <property type="term" value="C:cytosol"/>
    <property type="evidence" value="ECO:0000314"/>
    <property type="project" value="HPA"/>
</dbReference>
<dbReference type="GO" id="GO:0030496">
    <property type="term" value="C:midbody"/>
    <property type="evidence" value="ECO:0000314"/>
    <property type="project" value="UniProtKB"/>
</dbReference>
<dbReference type="GO" id="GO:0072686">
    <property type="term" value="C:mitotic spindle"/>
    <property type="evidence" value="ECO:0000314"/>
    <property type="project" value="UniProtKB"/>
</dbReference>
<dbReference type="GO" id="GO:0016604">
    <property type="term" value="C:nuclear body"/>
    <property type="evidence" value="ECO:0000314"/>
    <property type="project" value="HPA"/>
</dbReference>
<dbReference type="GO" id="GO:0005654">
    <property type="term" value="C:nucleoplasm"/>
    <property type="evidence" value="ECO:0000314"/>
    <property type="project" value="HPA"/>
</dbReference>
<dbReference type="GO" id="GO:0005634">
    <property type="term" value="C:nucleus"/>
    <property type="evidence" value="ECO:0000314"/>
    <property type="project" value="UniProtKB"/>
</dbReference>
<dbReference type="GO" id="GO:0005096">
    <property type="term" value="F:GTPase activator activity"/>
    <property type="evidence" value="ECO:0000315"/>
    <property type="project" value="UniProtKB"/>
</dbReference>
<dbReference type="GO" id="GO:0005085">
    <property type="term" value="F:guanyl-nucleotide exchange factor activity"/>
    <property type="evidence" value="ECO:0000314"/>
    <property type="project" value="UniProtKB"/>
</dbReference>
<dbReference type="GO" id="GO:0042803">
    <property type="term" value="F:protein homodimerization activity"/>
    <property type="evidence" value="ECO:0000314"/>
    <property type="project" value="UniProtKB"/>
</dbReference>
<dbReference type="GO" id="GO:0031267">
    <property type="term" value="F:small GTPase binding"/>
    <property type="evidence" value="ECO:0007669"/>
    <property type="project" value="Ensembl"/>
</dbReference>
<dbReference type="GO" id="GO:0090630">
    <property type="term" value="P:activation of GTPase activity"/>
    <property type="evidence" value="ECO:0000314"/>
    <property type="project" value="UniProtKB"/>
</dbReference>
<dbReference type="GO" id="GO:0032147">
    <property type="term" value="P:activation of protein kinase activity"/>
    <property type="evidence" value="ECO:0000314"/>
    <property type="project" value="UniProtKB"/>
</dbReference>
<dbReference type="GO" id="GO:0070830">
    <property type="term" value="P:bicellular tight junction assembly"/>
    <property type="evidence" value="ECO:0000315"/>
    <property type="project" value="UniProtKB"/>
</dbReference>
<dbReference type="GO" id="GO:0030154">
    <property type="term" value="P:cell differentiation"/>
    <property type="evidence" value="ECO:0007669"/>
    <property type="project" value="UniProtKB-KW"/>
</dbReference>
<dbReference type="GO" id="GO:0000902">
    <property type="term" value="P:cell morphogenesis"/>
    <property type="evidence" value="ECO:0007669"/>
    <property type="project" value="Ensembl"/>
</dbReference>
<dbReference type="GO" id="GO:0071277">
    <property type="term" value="P:cellular response to calcium ion"/>
    <property type="evidence" value="ECO:0000314"/>
    <property type="project" value="UniProtKB"/>
</dbReference>
<dbReference type="GO" id="GO:0070301">
    <property type="term" value="P:cellular response to hydrogen peroxide"/>
    <property type="evidence" value="ECO:0000314"/>
    <property type="project" value="UniProtKB"/>
</dbReference>
<dbReference type="GO" id="GO:0071479">
    <property type="term" value="P:cellular response to ionizing radiation"/>
    <property type="evidence" value="ECO:0000314"/>
    <property type="project" value="UniProtKB"/>
</dbReference>
<dbReference type="GO" id="GO:0035556">
    <property type="term" value="P:intracellular signal transduction"/>
    <property type="evidence" value="ECO:0007669"/>
    <property type="project" value="InterPro"/>
</dbReference>
<dbReference type="GO" id="GO:0000281">
    <property type="term" value="P:mitotic cytokinesis"/>
    <property type="evidence" value="ECO:0000315"/>
    <property type="project" value="UniProtKB"/>
</dbReference>
<dbReference type="GO" id="GO:0007399">
    <property type="term" value="P:nervous system development"/>
    <property type="evidence" value="ECO:0000318"/>
    <property type="project" value="GO_Central"/>
</dbReference>
<dbReference type="GO" id="GO:0043065">
    <property type="term" value="P:positive regulation of apoptotic process"/>
    <property type="evidence" value="ECO:0000314"/>
    <property type="project" value="UniProtKB"/>
</dbReference>
<dbReference type="GO" id="GO:0043123">
    <property type="term" value="P:positive regulation of canonical NF-kappaB signal transduction"/>
    <property type="evidence" value="ECO:0007001"/>
    <property type="project" value="UniProtKB"/>
</dbReference>
<dbReference type="GO" id="GO:0032467">
    <property type="term" value="P:positive regulation of cytokinesis"/>
    <property type="evidence" value="ECO:0000314"/>
    <property type="project" value="UniProtKB"/>
</dbReference>
<dbReference type="GO" id="GO:0043547">
    <property type="term" value="P:positive regulation of GTPase activity"/>
    <property type="evidence" value="ECO:0000314"/>
    <property type="project" value="UniProtKB"/>
</dbReference>
<dbReference type="GO" id="GO:1903438">
    <property type="term" value="P:positive regulation of mitotic cytokinetic process"/>
    <property type="evidence" value="ECO:0000315"/>
    <property type="project" value="UniProt"/>
</dbReference>
<dbReference type="GO" id="GO:0045666">
    <property type="term" value="P:positive regulation of neuron differentiation"/>
    <property type="evidence" value="ECO:0000250"/>
    <property type="project" value="UniProtKB"/>
</dbReference>
<dbReference type="GO" id="GO:0042307">
    <property type="term" value="P:positive regulation of protein import into nucleus"/>
    <property type="evidence" value="ECO:0000250"/>
    <property type="project" value="UniProtKB"/>
</dbReference>
<dbReference type="GO" id="GO:0051260">
    <property type="term" value="P:protein homooligomerization"/>
    <property type="evidence" value="ECO:0000314"/>
    <property type="project" value="UniProtKB"/>
</dbReference>
<dbReference type="GO" id="GO:0015031">
    <property type="term" value="P:protein transport"/>
    <property type="evidence" value="ECO:0007669"/>
    <property type="project" value="UniProtKB-KW"/>
</dbReference>
<dbReference type="GO" id="GO:0051988">
    <property type="term" value="P:regulation of attachment of spindle microtubules to kinetochore"/>
    <property type="evidence" value="ECO:0000315"/>
    <property type="project" value="UniProtKB"/>
</dbReference>
<dbReference type="GO" id="GO:2000431">
    <property type="term" value="P:regulation of cytokinesis, actomyosin contractile ring assembly"/>
    <property type="evidence" value="ECO:0007669"/>
    <property type="project" value="InterPro"/>
</dbReference>
<dbReference type="GO" id="GO:0045859">
    <property type="term" value="P:regulation of protein kinase activity"/>
    <property type="evidence" value="ECO:0000314"/>
    <property type="project" value="UniProtKB"/>
</dbReference>
<dbReference type="GO" id="GO:0051056">
    <property type="term" value="P:regulation of small GTPase mediated signal transduction"/>
    <property type="evidence" value="ECO:0000304"/>
    <property type="project" value="Reactome"/>
</dbReference>
<dbReference type="CDD" id="cd17733">
    <property type="entry name" value="BRCT_Ect2_rpt1"/>
    <property type="match status" value="1"/>
</dbReference>
<dbReference type="CDD" id="cd17732">
    <property type="entry name" value="BRCT_Ect2_rpt2"/>
    <property type="match status" value="1"/>
</dbReference>
<dbReference type="CDD" id="cd01229">
    <property type="entry name" value="PH_Ect2"/>
    <property type="match status" value="1"/>
</dbReference>
<dbReference type="CDD" id="cd00160">
    <property type="entry name" value="RhoGEF"/>
    <property type="match status" value="1"/>
</dbReference>
<dbReference type="FunFam" id="3.40.50.10190:FF:000058">
    <property type="entry name" value="Epithelial cell transforming 2"/>
    <property type="match status" value="1"/>
</dbReference>
<dbReference type="FunFam" id="1.20.900.10:FF:000022">
    <property type="entry name" value="protein ECT2 isoform X1"/>
    <property type="match status" value="1"/>
</dbReference>
<dbReference type="FunFam" id="3.40.50.10190:FF:000015">
    <property type="entry name" value="protein ECT2 isoform X1"/>
    <property type="match status" value="1"/>
</dbReference>
<dbReference type="FunFam" id="2.30.29.30:FF:000162">
    <property type="entry name" value="protein ECT2 isoform X2"/>
    <property type="match status" value="1"/>
</dbReference>
<dbReference type="FunFam" id="3.40.50.10190:FF:000016">
    <property type="entry name" value="protein ECT2 isoform X3"/>
    <property type="match status" value="1"/>
</dbReference>
<dbReference type="Gene3D" id="3.40.50.10190">
    <property type="entry name" value="BRCT domain"/>
    <property type="match status" value="3"/>
</dbReference>
<dbReference type="Gene3D" id="1.20.900.10">
    <property type="entry name" value="Dbl homology (DH) domain"/>
    <property type="match status" value="1"/>
</dbReference>
<dbReference type="Gene3D" id="2.30.29.30">
    <property type="entry name" value="Pleckstrin-homology domain (PH domain)/Phosphotyrosine-binding domain (PTB)"/>
    <property type="match status" value="1"/>
</dbReference>
<dbReference type="InterPro" id="IPR001357">
    <property type="entry name" value="BRCT_dom"/>
</dbReference>
<dbReference type="InterPro" id="IPR036420">
    <property type="entry name" value="BRCT_dom_sf"/>
</dbReference>
<dbReference type="InterPro" id="IPR035899">
    <property type="entry name" value="DBL_dom_sf"/>
</dbReference>
<dbReference type="InterPro" id="IPR000219">
    <property type="entry name" value="DH_dom"/>
</dbReference>
<dbReference type="InterPro" id="IPR026817">
    <property type="entry name" value="Ect2"/>
</dbReference>
<dbReference type="InterPro" id="IPR049396">
    <property type="entry name" value="ECT2_BRCT0"/>
</dbReference>
<dbReference type="InterPro" id="IPR049395">
    <property type="entry name" value="ECT2_PH"/>
</dbReference>
<dbReference type="InterPro" id="IPR001331">
    <property type="entry name" value="GDS_CDC24_CS"/>
</dbReference>
<dbReference type="InterPro" id="IPR011993">
    <property type="entry name" value="PH-like_dom_sf"/>
</dbReference>
<dbReference type="PANTHER" id="PTHR16777">
    <property type="entry name" value="PROTEIN ECT2"/>
    <property type="match status" value="1"/>
</dbReference>
<dbReference type="PANTHER" id="PTHR16777:SF2">
    <property type="entry name" value="PROTEIN ECT2"/>
    <property type="match status" value="1"/>
</dbReference>
<dbReference type="Pfam" id="PF00533">
    <property type="entry name" value="BRCT"/>
    <property type="match status" value="1"/>
</dbReference>
<dbReference type="Pfam" id="PF21243">
    <property type="entry name" value="ECT2_BRCT0"/>
    <property type="match status" value="1"/>
</dbReference>
<dbReference type="Pfam" id="PF21242">
    <property type="entry name" value="ECT2_PH"/>
    <property type="match status" value="1"/>
</dbReference>
<dbReference type="Pfam" id="PF12738">
    <property type="entry name" value="PTCB-BRCT"/>
    <property type="match status" value="1"/>
</dbReference>
<dbReference type="Pfam" id="PF00621">
    <property type="entry name" value="RhoGEF"/>
    <property type="match status" value="1"/>
</dbReference>
<dbReference type="SMART" id="SM00292">
    <property type="entry name" value="BRCT"/>
    <property type="match status" value="2"/>
</dbReference>
<dbReference type="SMART" id="SM00325">
    <property type="entry name" value="RhoGEF"/>
    <property type="match status" value="1"/>
</dbReference>
<dbReference type="SUPFAM" id="SSF52113">
    <property type="entry name" value="BRCT domain"/>
    <property type="match status" value="2"/>
</dbReference>
<dbReference type="SUPFAM" id="SSF48065">
    <property type="entry name" value="DBL homology domain (DH-domain)"/>
    <property type="match status" value="1"/>
</dbReference>
<dbReference type="SUPFAM" id="SSF50729">
    <property type="entry name" value="PH domain-like"/>
    <property type="match status" value="1"/>
</dbReference>
<dbReference type="PROSITE" id="PS50172">
    <property type="entry name" value="BRCT"/>
    <property type="match status" value="2"/>
</dbReference>
<dbReference type="PROSITE" id="PS00741">
    <property type="entry name" value="DH_1"/>
    <property type="match status" value="1"/>
</dbReference>
<dbReference type="PROSITE" id="PS50010">
    <property type="entry name" value="DH_2"/>
    <property type="match status" value="1"/>
</dbReference>
<organism>
    <name type="scientific">Homo sapiens</name>
    <name type="common">Human</name>
    <dbReference type="NCBI Taxonomy" id="9606"/>
    <lineage>
        <taxon>Eukaryota</taxon>
        <taxon>Metazoa</taxon>
        <taxon>Chordata</taxon>
        <taxon>Craniata</taxon>
        <taxon>Vertebrata</taxon>
        <taxon>Euteleostomi</taxon>
        <taxon>Mammalia</taxon>
        <taxon>Eutheria</taxon>
        <taxon>Euarchontoglires</taxon>
        <taxon>Primates</taxon>
        <taxon>Haplorrhini</taxon>
        <taxon>Catarrhini</taxon>
        <taxon>Hominidae</taxon>
        <taxon>Homo</taxon>
    </lineage>
</organism>
<protein>
    <recommendedName>
        <fullName>Protein ECT2</fullName>
    </recommendedName>
    <alternativeName>
        <fullName>Epithelial cell-transforming sequence 2 oncogene</fullName>
    </alternativeName>
</protein>
<gene>
    <name evidence="34" type="primary">ECT2</name>
</gene>